<comment type="function">
    <text>Type I collagen is a member of group I collagen (fibrillar forming collagen).</text>
</comment>
<comment type="subunit">
    <text evidence="40 73">Trimers of one alpha 2(I) and two alpha 1(I) chains (Probable). Interacts (via C-terminus) with TMEM131 (via PapD-L domain); the interaction is direct and is involved in assembly and TRAPPIII ER-to-Golgi transport complex-dependent secretion of collagen (PubMed:32095531).</text>
</comment>
<comment type="interaction">
    <interactant intactId="EBI-983038">
        <id>P08123</id>
    </interactant>
    <interactant intactId="EBI-982999">
        <id>P02452</id>
        <label>COL1A1</label>
    </interactant>
    <organismsDiffer>false</organismsDiffer>
    <experiments>5</experiments>
</comment>
<comment type="interaction">
    <interactant intactId="EBI-983038">
        <id>P08123</id>
    </interactant>
    <interactant intactId="EBI-711990">
        <id>O00303</id>
        <label>EIF3F</label>
    </interactant>
    <organismsDiffer>false</organismsDiffer>
    <experiments>3</experiments>
</comment>
<comment type="interaction">
    <interactant intactId="EBI-983038">
        <id>P08123</id>
    </interactant>
    <interactant intactId="EBI-1051469">
        <id>Q6PIL6</id>
        <label>KCNIP4</label>
    </interactant>
    <organismsDiffer>false</organismsDiffer>
    <experiments>9</experiments>
</comment>
<comment type="interaction">
    <interactant intactId="EBI-983038">
        <id>P08123</id>
    </interactant>
    <interactant intactId="EBI-6165891">
        <id>Q14696</id>
        <label>MESD</label>
    </interactant>
    <organismsDiffer>false</organismsDiffer>
    <experiments>3</experiments>
</comment>
<comment type="interaction">
    <interactant intactId="EBI-983038">
        <id>P08123</id>
    </interactant>
    <interactant intactId="EBI-347996">
        <id>O43765</id>
        <label>SGTA</label>
    </interactant>
    <organismsDiffer>false</organismsDiffer>
    <experiments>11</experiments>
</comment>
<comment type="interaction">
    <interactant intactId="EBI-983038">
        <id>P08123</id>
    </interactant>
    <interactant intactId="EBI-744081">
        <id>Q96EQ0</id>
        <label>SGTB</label>
    </interactant>
    <organismsDiffer>false</organismsDiffer>
    <experiments>3</experiments>
</comment>
<comment type="interaction">
    <interactant intactId="EBI-983038">
        <id>P08123</id>
    </interactant>
    <interactant intactId="EBI-358489">
        <id>Q96GM5</id>
        <label>SMARCD1</label>
    </interactant>
    <organismsDiffer>false</organismsDiffer>
    <experiments>3</experiments>
</comment>
<comment type="interaction">
    <interactant intactId="EBI-983038">
        <id>P08123</id>
    </interactant>
    <interactant intactId="EBI-741480">
        <id>Q9UMX0</id>
        <label>UBQLN1</label>
    </interactant>
    <organismsDiffer>false</organismsDiffer>
    <experiments>6</experiments>
</comment>
<comment type="interaction">
    <interactant intactId="EBI-983038">
        <id>P08123</id>
    </interactant>
    <interactant intactId="EBI-10173939">
        <id>Q9UMX0-2</id>
        <label>UBQLN1</label>
    </interactant>
    <organismsDiffer>false</organismsDiffer>
    <experiments>6</experiments>
</comment>
<comment type="interaction">
    <interactant intactId="EBI-983038">
        <id>P08123</id>
    </interactant>
    <interactant intactId="EBI-947187">
        <id>Q9UHD9</id>
        <label>UBQLN2</label>
    </interactant>
    <organismsDiffer>false</organismsDiffer>
    <experiments>5</experiments>
</comment>
<comment type="subcellular location">
    <subcellularLocation>
        <location evidence="5">Secreted</location>
        <location evidence="5">Extracellular space</location>
        <location evidence="5">Extracellular matrix</location>
    </subcellularLocation>
</comment>
<comment type="tissue specificity">
    <text>Forms the fibrils of tendon, ligaments and bones. In bones the fibrils are mineralized with calcium hydroxyapatite.</text>
</comment>
<comment type="domain">
    <text evidence="1">The C-terminal propeptide, also known as COLFI domain, have crucial roles in tissue growth and repair by controlling both the intracellular assembly of procollagen molecules and the extracellular assembly of collagen fibrils. It binds a calcium ion which is essential for its function.</text>
</comment>
<comment type="PTM">
    <text evidence="45">Prolines at the third position of the tripeptide repeating unit (G-X-Y) are hydroxylated in some or all of the chains.</text>
</comment>
<comment type="disease" evidence="14 33 42">
    <disease id="DI-05166">
        <name>Ehlers-Danlos syndrome, arthrochalasia type, 2</name>
        <acronym>EDSARTH2</acronym>
        <description>A form of Ehlers-Danlos syndrome, a connective tissue disorder characterized by hyperextensible skin, atrophic cutaneous scars due to tissue fragility and joint hyperlaxity. EDSARTH2 is an autosomal dominant condition characterized by frequent congenital hip dislocation and extreme joint laxity with recurrent joint subluxations and minimal skin involvement.</description>
        <dbReference type="MIM" id="617821"/>
    </disease>
    <text>The disease is caused by variants affecting the gene represented in this entry.</text>
</comment>
<comment type="disease" evidence="16 17 25 64 68">
    <disease id="DI-02106">
        <name>Osteogenesis imperfecta 1</name>
        <acronym>OI1</acronym>
        <description>An autosomal dominant form of osteogenesis imperfecta, a disorder of bone formation characterized by bone low bone mass, bone fragility and susceptibility to fractures after minimal trauma. Disease severity ranges from very mild forms without fractures to intrauterine fractures and perinatal lethality. Extraskeletal manifestations, which affect a variable number of patients, are dentinogenesis imperfecta, hearing loss, and blue sclerae. OI1 is a non-deforming form with normal height or mild short stature, and no dentinogenesis imperfecta.</description>
        <dbReference type="MIM" id="166200"/>
    </disease>
    <text>The disease is caused by variants affecting the gene represented in this entry.</text>
</comment>
<comment type="disease" evidence="8 9 10 11 12 17 19 20 21 23 24 28 29 35 39 51 56 57 58 61 71 72">
    <disease id="DI-02107">
        <name>Osteogenesis imperfecta 2</name>
        <acronym>OI2</acronym>
        <description>An autosomal dominant form of osteogenesis imperfecta, a disorder of bone formation characterized by low bone mass, bone fragility and susceptibility to fractures after minimal trauma. Disease severity ranges from very mild forms without fractures to intrauterine fractures and perinatal lethality. Extraskeletal manifestations, which affect a variable number of patients, are dentinogenesis imperfecta, hearing loss, and blue sclerae. OI2 is characterized by bone fragility, with many perinatal fractures, severe bowing of long bones, undermineralization, and death in the perinatal period due to respiratory insufficiency.</description>
        <dbReference type="MIM" id="166210"/>
    </disease>
    <text>The disease is caused by variants affecting the gene represented in this entry.</text>
</comment>
<comment type="disease" evidence="18">
    <disease id="DI-01317">
        <name>Ehlers-Danlos syndrome, cardiac valvular type</name>
        <acronym>EDSCV</acronym>
        <description>A form of Ehlers-Danlos syndrome, a group of connective tissue disorders characterized by skin hyperextensibility, articular hypermobility, and tissue fragility. EDSCV is an autosomal recessive disease characterized by mitral valve prolapse and insufficiency, mitral regurgitation, and aortic insufficiency, in addition to joint laxity, skin hyperextensibility and friability, and abnormal scar formation.</description>
        <dbReference type="MIM" id="225320"/>
    </disease>
    <text>The disease is caused by variants affecting the gene represented in this entry.</text>
</comment>
<comment type="disease" evidence="7 17 19 25 34 50 52 53 54 55 59 63 64 66 67 68">
    <disease id="DI-02108">
        <name>Osteogenesis imperfecta 3</name>
        <acronym>OI3</acronym>
        <description>An autosomal dominant form of osteogenesis imperfecta, a disorder of bone formation characterized by low bone mass, bone fragility and susceptibility to fractures after minimal trauma. Disease severity ranges from very mild forms without fractures to intrauterine fractures and perinatal lethality. Extraskeletal manifestations, which affect a variable number of patients, are dentinogenesis imperfecta, hearing loss, and blue sclerae. OI3 is characterized by progressively deforming bones, very short stature, a triangular face, severe scoliosis, grayish sclera and dentinogenesis imperfecta.</description>
        <dbReference type="MIM" id="259420"/>
    </disease>
    <text>The disease is caused by variants affecting the gene represented in this entry.</text>
</comment>
<comment type="disease" evidence="15 17 19 26 27 38 51 60 62 67">
    <disease id="DI-02103">
        <name>Osteogenesis imperfecta 4</name>
        <acronym>OI4</acronym>
        <description>An autosomal dominant form of osteogenesis imperfecta, a disorder of bone formation characterized by low bone mass, bone fragility and susceptibility to fractures after minimal trauma. Disease severity ranges from very mild forms without fractures to intrauterine fractures and perinatal lethality. Extraskeletal manifestations, which affect a variable number of patients, are dentinogenesis imperfecta, hearing loss, and blue sclerae. OI4 is characterized by moderately short stature, mild to moderate scoliosis, grayish or white sclera and dentinogenesis imperfecta.</description>
        <dbReference type="MIM" id="166220"/>
    </disease>
    <text>The disease is caused by variants affecting the gene represented in this entry.</text>
</comment>
<comment type="disease" evidence="32">
    <disease id="DI-05987">
        <name>Combined osteogenesis imperfecta and Ehlers-Danlos syndrome 2</name>
        <acronym>OIEDS2</acronym>
        <description>An autosomal dominant connective tissue disorder characterized by osteopenia, bone fragility, long bone fractures, blue sclerae, joint hyperextensibility, soft and hyperextensible skin, abnormal wound healing, easy bruising, and vascular fragility.</description>
        <dbReference type="MIM" id="619120"/>
    </disease>
    <text>The disease is caused by variants affecting the gene represented in this entry.</text>
</comment>
<comment type="disease">
    <text>A chromosomal aberration involving COL1A2 may be a cause of lipoblastomas, which are benign tumors resulting from transformation of adipocytes, usually diagnosed in children. Translocation t(7;8)(p22;q13) with PLAG1.</text>
</comment>
<comment type="similarity">
    <text evidence="5">Belongs to the fibrillar collagen family.</text>
</comment>
<comment type="online information" name="Atlas of Genetics and Cytogenetics in Oncology and Haematology">
    <link uri="https://atlasgeneticsoncology.org/gene/411/COL1A2"/>
</comment>
<comment type="online information" name="Osteogenesis imperfecta variant database">
    <link uri="https://www.LOVD.nl/COL1A2"/>
    <text>The COL1A2 gene homepage</text>
</comment>
<name>CO1A2_HUMAN</name>
<dbReference type="EMBL" id="J03464">
    <property type="protein sequence ID" value="AAB59374.1"/>
    <property type="molecule type" value="mRNA"/>
</dbReference>
<dbReference type="EMBL" id="Z74616">
    <property type="protein sequence ID" value="CAA98969.1"/>
    <property type="molecule type" value="mRNA"/>
</dbReference>
<dbReference type="EMBL" id="AF004877">
    <property type="protein sequence ID" value="AAB93981.1"/>
    <property type="molecule type" value="Genomic_DNA"/>
</dbReference>
<dbReference type="EMBL" id="BC042586">
    <property type="protein sequence ID" value="AAH42586.1"/>
    <property type="molecule type" value="mRNA"/>
</dbReference>
<dbReference type="EMBL" id="BC054498">
    <property type="protein sequence ID" value="AAH54498.1"/>
    <property type="molecule type" value="mRNA"/>
</dbReference>
<dbReference type="EMBL" id="Y00724">
    <property type="protein sequence ID" value="CAA68709.1"/>
    <property type="molecule type" value="mRNA"/>
</dbReference>
<dbReference type="EMBL" id="X02488">
    <property type="protein sequence ID" value="CAA26320.1"/>
    <property type="molecule type" value="mRNA"/>
</dbReference>
<dbReference type="EMBL" id="AB004317">
    <property type="protein sequence ID" value="BAA25383.1"/>
    <property type="molecule type" value="Genomic_DNA"/>
</dbReference>
<dbReference type="EMBL" id="M35391">
    <property type="protein sequence ID" value="AAA60041.1"/>
    <property type="molecule type" value="Genomic_DNA"/>
</dbReference>
<dbReference type="EMBL" id="S98904">
    <property type="protein sequence ID" value="AAB22126.1"/>
    <property type="molecule type" value="Genomic_DNA"/>
</dbReference>
<dbReference type="EMBL" id="M21671">
    <property type="protein sequence ID" value="AAA59994.1"/>
    <property type="molecule type" value="Genomic_DNA"/>
</dbReference>
<dbReference type="EMBL" id="S41099">
    <property type="protein sequence ID" value="AAB22761.1"/>
    <property type="molecule type" value="mRNA"/>
</dbReference>
<dbReference type="EMBL" id="AC002528">
    <property type="protein sequence ID" value="AAB69977.1"/>
    <property type="molecule type" value="Genomic_DNA"/>
</dbReference>
<dbReference type="EMBL" id="M21353">
    <property type="protein sequence ID" value="AAA52053.1"/>
    <property type="molecule type" value="Genomic_DNA"/>
</dbReference>
<dbReference type="EMBL" id="M28985">
    <property type="protein sequence ID" value="AAA60356.1"/>
    <property type="molecule type" value="Genomic_DNA"/>
</dbReference>
<dbReference type="EMBL" id="V00503">
    <property type="protein sequence ID" value="CAA23761.1"/>
    <property type="molecule type" value="mRNA"/>
</dbReference>
<dbReference type="EMBL" id="S96821">
    <property type="protein sequence ID" value="AAB22020.2"/>
    <property type="molecule type" value="mRNA"/>
</dbReference>
<dbReference type="EMBL" id="L47668">
    <property type="protein sequence ID" value="AAB59577.1"/>
    <property type="molecule type" value="mRNA"/>
</dbReference>
<dbReference type="EMBL" id="X55525">
    <property type="protein sequence ID" value="CAA39142.1"/>
    <property type="molecule type" value="mRNA"/>
</dbReference>
<dbReference type="EMBL" id="J00114">
    <property type="protein sequence ID" value="AAA51996.1"/>
    <property type="molecule type" value="mRNA"/>
</dbReference>
<dbReference type="EMBL" id="M22816">
    <property type="protein sequence ID" value="AAA51844.1"/>
    <property type="molecule type" value="mRNA"/>
</dbReference>
<dbReference type="EMBL" id="M22817">
    <property type="protein sequence ID" value="AAA51846.1"/>
    <property type="molecule type" value="Genomic_DNA"/>
</dbReference>
<dbReference type="EMBL" id="K01078">
    <property type="protein sequence ID" value="AAA51887.1"/>
    <property type="molecule type" value="Genomic_DNA"/>
</dbReference>
<dbReference type="EMBL" id="K02568">
    <property type="protein sequence ID" value="AAA51850.1"/>
    <property type="molecule type" value="Genomic_DNA"/>
</dbReference>
<dbReference type="CCDS" id="CCDS34682.1"/>
<dbReference type="PIR" id="A28500">
    <property type="entry name" value="CGHU2S"/>
</dbReference>
<dbReference type="RefSeq" id="NP_000080.2">
    <property type="nucleotide sequence ID" value="NM_000089.3"/>
</dbReference>
<dbReference type="PDB" id="5CTD">
    <property type="method" value="X-ray"/>
    <property type="resolution" value="1.60 A"/>
    <property type="chains" value="B=484-495"/>
</dbReference>
<dbReference type="PDB" id="5CTI">
    <property type="method" value="X-ray"/>
    <property type="resolution" value="1.90 A"/>
    <property type="chains" value="B=484-495"/>
</dbReference>
<dbReference type="PDB" id="5CVA">
    <property type="method" value="X-ray"/>
    <property type="resolution" value="2.10 A"/>
    <property type="chains" value="A/D=484-495"/>
</dbReference>
<dbReference type="PDB" id="6JEC">
    <property type="method" value="X-ray"/>
    <property type="resolution" value="2.05 A"/>
    <property type="chains" value="A/B/C=45-72"/>
</dbReference>
<dbReference type="PDBsum" id="5CTD"/>
<dbReference type="PDBsum" id="5CTI"/>
<dbReference type="PDBsum" id="5CVA"/>
<dbReference type="PDBsum" id="6JEC"/>
<dbReference type="SMR" id="P08123"/>
<dbReference type="BioGRID" id="107675">
    <property type="interactions" value="59"/>
</dbReference>
<dbReference type="ComplexPortal" id="CPX-1650">
    <property type="entry name" value="Collagen type I trimer"/>
</dbReference>
<dbReference type="DIP" id="DIP-36079N"/>
<dbReference type="FunCoup" id="P08123">
    <property type="interactions" value="743"/>
</dbReference>
<dbReference type="IntAct" id="P08123">
    <property type="interactions" value="41"/>
</dbReference>
<dbReference type="MINT" id="P08123"/>
<dbReference type="STRING" id="9606.ENSP00000297268"/>
<dbReference type="ChEMBL" id="CHEMBL2685"/>
<dbReference type="DrugBank" id="DB06037">
    <property type="generic name" value="PR-15"/>
</dbReference>
<dbReference type="GlyConnect" id="1135">
    <property type="glycosylation" value="7 N-Linked glycans (1 site)"/>
</dbReference>
<dbReference type="GlyCosmos" id="P08123">
    <property type="glycosylation" value="4 sites, 8 glycans"/>
</dbReference>
<dbReference type="GlyGen" id="P08123">
    <property type="glycosylation" value="11 sites, 15 N-linked glycans (1 site), 3 O-linked glycans (4 sites)"/>
</dbReference>
<dbReference type="iPTMnet" id="P08123"/>
<dbReference type="MetOSite" id="P08123"/>
<dbReference type="PhosphoSitePlus" id="P08123"/>
<dbReference type="BioMuta" id="COL1A2"/>
<dbReference type="DMDM" id="296439507"/>
<dbReference type="jPOST" id="P08123"/>
<dbReference type="MassIVE" id="P08123"/>
<dbReference type="PaxDb" id="9606-ENSP00000297268"/>
<dbReference type="PeptideAtlas" id="P08123"/>
<dbReference type="ProteomicsDB" id="52070"/>
<dbReference type="Pumba" id="P08123"/>
<dbReference type="ABCD" id="P08123">
    <property type="antibodies" value="1 sequenced antibody"/>
</dbReference>
<dbReference type="Antibodypedia" id="15754">
    <property type="antibodies" value="451 antibodies from 35 providers"/>
</dbReference>
<dbReference type="DNASU" id="1278"/>
<dbReference type="Ensembl" id="ENST00000297268.11">
    <property type="protein sequence ID" value="ENSP00000297268.6"/>
    <property type="gene ID" value="ENSG00000164692.19"/>
</dbReference>
<dbReference type="GeneID" id="1278"/>
<dbReference type="KEGG" id="hsa:1278"/>
<dbReference type="MANE-Select" id="ENST00000297268.11">
    <property type="protein sequence ID" value="ENSP00000297268.6"/>
    <property type="RefSeq nucleotide sequence ID" value="NM_000089.4"/>
    <property type="RefSeq protein sequence ID" value="NP_000080.2"/>
</dbReference>
<dbReference type="UCSC" id="uc003ung.1">
    <property type="organism name" value="human"/>
</dbReference>
<dbReference type="AGR" id="HGNC:2198"/>
<dbReference type="CTD" id="1278"/>
<dbReference type="DisGeNET" id="1278"/>
<dbReference type="GeneCards" id="COL1A2"/>
<dbReference type="GeneReviews" id="COL1A2"/>
<dbReference type="HGNC" id="HGNC:2198">
    <property type="gene designation" value="COL1A2"/>
</dbReference>
<dbReference type="HPA" id="ENSG00000164692">
    <property type="expression patterns" value="Tissue enhanced (cervix, gallbladder, ovary, smooth muscle)"/>
</dbReference>
<dbReference type="MalaCards" id="COL1A2"/>
<dbReference type="MIM" id="120160">
    <property type="type" value="gene"/>
</dbReference>
<dbReference type="MIM" id="166200">
    <property type="type" value="phenotype"/>
</dbReference>
<dbReference type="MIM" id="166210">
    <property type="type" value="phenotype"/>
</dbReference>
<dbReference type="MIM" id="166220">
    <property type="type" value="phenotype"/>
</dbReference>
<dbReference type="MIM" id="225320">
    <property type="type" value="phenotype"/>
</dbReference>
<dbReference type="MIM" id="259420">
    <property type="type" value="phenotype"/>
</dbReference>
<dbReference type="MIM" id="617821">
    <property type="type" value="phenotype"/>
</dbReference>
<dbReference type="MIM" id="619120">
    <property type="type" value="phenotype"/>
</dbReference>
<dbReference type="neXtProt" id="NX_P08123"/>
<dbReference type="OpenTargets" id="ENSG00000164692"/>
<dbReference type="Orphanet" id="1899">
    <property type="disease" value="Arthrochalasia Ehlers-Danlos syndrome"/>
</dbReference>
<dbReference type="Orphanet" id="230851">
    <property type="disease" value="Cardiac-valvular Ehlers-Danlos syndrome"/>
</dbReference>
<dbReference type="Orphanet" id="230857">
    <property type="disease" value="Ehlers-Danlos/osteogenesis imperfecta syndrome"/>
</dbReference>
<dbReference type="Orphanet" id="314029">
    <property type="disease" value="High bone mass osteogenesis imperfecta"/>
</dbReference>
<dbReference type="Orphanet" id="216796">
    <property type="disease" value="Osteogenesis imperfecta type 1"/>
</dbReference>
<dbReference type="Orphanet" id="216804">
    <property type="disease" value="Osteogenesis imperfecta type 2"/>
</dbReference>
<dbReference type="Orphanet" id="216812">
    <property type="disease" value="Osteogenesis imperfecta type 3"/>
</dbReference>
<dbReference type="Orphanet" id="216820">
    <property type="disease" value="Osteogenesis imperfecta type 4"/>
</dbReference>
<dbReference type="PharmGKB" id="PA35042"/>
<dbReference type="VEuPathDB" id="HostDB:ENSG00000164692"/>
<dbReference type="eggNOG" id="KOG3544">
    <property type="taxonomic scope" value="Eukaryota"/>
</dbReference>
<dbReference type="GeneTree" id="ENSGT00940000155639"/>
<dbReference type="InParanoid" id="P08123"/>
<dbReference type="OMA" id="SFYWIDP"/>
<dbReference type="OrthoDB" id="8939548at2759"/>
<dbReference type="PAN-GO" id="P08123">
    <property type="GO annotations" value="5 GO annotations based on evolutionary models"/>
</dbReference>
<dbReference type="PhylomeDB" id="P08123"/>
<dbReference type="TreeFam" id="TF344135"/>
<dbReference type="PathwayCommons" id="P08123"/>
<dbReference type="Reactome" id="R-HSA-114604">
    <property type="pathway name" value="GPVI-mediated activation cascade"/>
</dbReference>
<dbReference type="Reactome" id="R-HSA-1442490">
    <property type="pathway name" value="Collagen degradation"/>
</dbReference>
<dbReference type="Reactome" id="R-HSA-1474244">
    <property type="pathway name" value="Extracellular matrix organization"/>
</dbReference>
<dbReference type="Reactome" id="R-HSA-1650814">
    <property type="pathway name" value="Collagen biosynthesis and modifying enzymes"/>
</dbReference>
<dbReference type="Reactome" id="R-HSA-198933">
    <property type="pathway name" value="Immunoregulatory interactions between a Lymphoid and a non-Lymphoid cell"/>
</dbReference>
<dbReference type="Reactome" id="R-HSA-2022090">
    <property type="pathway name" value="Assembly of collagen fibrils and other multimeric structures"/>
</dbReference>
<dbReference type="Reactome" id="R-HSA-202733">
    <property type="pathway name" value="Cell surface interactions at the vascular wall"/>
</dbReference>
<dbReference type="Reactome" id="R-HSA-216083">
    <property type="pathway name" value="Integrin cell surface interactions"/>
</dbReference>
<dbReference type="Reactome" id="R-HSA-2173796">
    <property type="pathway name" value="SMAD2/SMAD3:SMAD4 heterotrimer regulates transcription"/>
</dbReference>
<dbReference type="Reactome" id="R-HSA-2214320">
    <property type="pathway name" value="Anchoring fibril formation"/>
</dbReference>
<dbReference type="Reactome" id="R-HSA-2243919">
    <property type="pathway name" value="Crosslinking of collagen fibrils"/>
</dbReference>
<dbReference type="Reactome" id="R-HSA-3000170">
    <property type="pathway name" value="Syndecan interactions"/>
</dbReference>
<dbReference type="Reactome" id="R-HSA-3000171">
    <property type="pathway name" value="Non-integrin membrane-ECM interactions"/>
</dbReference>
<dbReference type="Reactome" id="R-HSA-3000178">
    <property type="pathway name" value="ECM proteoglycans"/>
</dbReference>
<dbReference type="Reactome" id="R-HSA-3000480">
    <property type="pathway name" value="Scavenging by Class A Receptors"/>
</dbReference>
<dbReference type="Reactome" id="R-HSA-430116">
    <property type="pathway name" value="GP1b-IX-V activation signalling"/>
</dbReference>
<dbReference type="Reactome" id="R-HSA-6785807">
    <property type="pathway name" value="Interleukin-4 and Interleukin-13 signaling"/>
</dbReference>
<dbReference type="Reactome" id="R-HSA-75892">
    <property type="pathway name" value="Platelet Adhesion to exposed collagen"/>
</dbReference>
<dbReference type="Reactome" id="R-HSA-76009">
    <property type="pathway name" value="Platelet Aggregation (Plug Formation)"/>
</dbReference>
<dbReference type="Reactome" id="R-HSA-8874081">
    <property type="pathway name" value="MET activates PTK2 signaling"/>
</dbReference>
<dbReference type="Reactome" id="R-HSA-8948216">
    <property type="pathway name" value="Collagen chain trimerization"/>
</dbReference>
<dbReference type="Reactome" id="R-HSA-9845619">
    <property type="pathway name" value="Enhanced cleavage of VWF variant by ADAMTS13"/>
</dbReference>
<dbReference type="Reactome" id="R-HSA-9845620">
    <property type="pathway name" value="Enhanced binding of GP1BA variant to VWF multimer:collagen"/>
</dbReference>
<dbReference type="Reactome" id="R-HSA-9845621">
    <property type="pathway name" value="Defective VWF cleavage by ADAMTS13 variant"/>
</dbReference>
<dbReference type="Reactome" id="R-HSA-9845622">
    <property type="pathway name" value="Defective VWF binding to collagen type I"/>
</dbReference>
<dbReference type="Reactome" id="R-HSA-9846298">
    <property type="pathway name" value="Defective binding of VWF variant to GPIb:IX:V"/>
</dbReference>
<dbReference type="SignaLink" id="P08123"/>
<dbReference type="SIGNOR" id="P08123"/>
<dbReference type="BioGRID-ORCS" id="1278">
    <property type="hits" value="13 hits in 1159 CRISPR screens"/>
</dbReference>
<dbReference type="ChiTaRS" id="COL1A2">
    <property type="organism name" value="human"/>
</dbReference>
<dbReference type="GeneWiki" id="COL1A2"/>
<dbReference type="GenomeRNAi" id="1278"/>
<dbReference type="Pharos" id="P08123">
    <property type="development level" value="Tbio"/>
</dbReference>
<dbReference type="PRO" id="PR:P08123"/>
<dbReference type="Proteomes" id="UP000005640">
    <property type="component" value="Chromosome 7"/>
</dbReference>
<dbReference type="RNAct" id="P08123">
    <property type="molecule type" value="protein"/>
</dbReference>
<dbReference type="Bgee" id="ENSG00000164692">
    <property type="expression patterns" value="Expressed in periodontal ligament and 213 other cell types or tissues"/>
</dbReference>
<dbReference type="ExpressionAtlas" id="P08123">
    <property type="expression patterns" value="baseline and differential"/>
</dbReference>
<dbReference type="GO" id="GO:0005584">
    <property type="term" value="C:collagen type I trimer"/>
    <property type="evidence" value="ECO:0000314"/>
    <property type="project" value="UniProtKB"/>
</dbReference>
<dbReference type="GO" id="GO:0062023">
    <property type="term" value="C:collagen-containing extracellular matrix"/>
    <property type="evidence" value="ECO:0007005"/>
    <property type="project" value="UniProtKB"/>
</dbReference>
<dbReference type="GO" id="GO:0005788">
    <property type="term" value="C:endoplasmic reticulum lumen"/>
    <property type="evidence" value="ECO:0000304"/>
    <property type="project" value="Reactome"/>
</dbReference>
<dbReference type="GO" id="GO:0070062">
    <property type="term" value="C:extracellular exosome"/>
    <property type="evidence" value="ECO:0007005"/>
    <property type="project" value="UniProtKB"/>
</dbReference>
<dbReference type="GO" id="GO:0005576">
    <property type="term" value="C:extracellular region"/>
    <property type="evidence" value="ECO:0007005"/>
    <property type="project" value="BHF-UCL"/>
</dbReference>
<dbReference type="GO" id="GO:0005615">
    <property type="term" value="C:extracellular space"/>
    <property type="evidence" value="ECO:0000314"/>
    <property type="project" value="UniProtKB"/>
</dbReference>
<dbReference type="GO" id="GO:0005201">
    <property type="term" value="F:extracellular matrix structural constituent"/>
    <property type="evidence" value="ECO:0000303"/>
    <property type="project" value="UniProtKB"/>
</dbReference>
<dbReference type="GO" id="GO:0030020">
    <property type="term" value="F:extracellular matrix structural constituent conferring tensile strength"/>
    <property type="evidence" value="ECO:0007005"/>
    <property type="project" value="BHF-UCL"/>
</dbReference>
<dbReference type="GO" id="GO:0042802">
    <property type="term" value="F:identical protein binding"/>
    <property type="evidence" value="ECO:0000314"/>
    <property type="project" value="UniProtKB"/>
</dbReference>
<dbReference type="GO" id="GO:0046872">
    <property type="term" value="F:metal ion binding"/>
    <property type="evidence" value="ECO:0007669"/>
    <property type="project" value="UniProtKB-KW"/>
</dbReference>
<dbReference type="GO" id="GO:0048407">
    <property type="term" value="F:platelet-derived growth factor binding"/>
    <property type="evidence" value="ECO:0000314"/>
    <property type="project" value="MGI"/>
</dbReference>
<dbReference type="GO" id="GO:0002020">
    <property type="term" value="F:protease binding"/>
    <property type="evidence" value="ECO:0000353"/>
    <property type="project" value="CAFA"/>
</dbReference>
<dbReference type="GO" id="GO:0030674">
    <property type="term" value="F:protein-macromolecule adaptor activity"/>
    <property type="evidence" value="ECO:0000315"/>
    <property type="project" value="UniProtKB"/>
</dbReference>
<dbReference type="GO" id="GO:0046332">
    <property type="term" value="F:SMAD binding"/>
    <property type="evidence" value="ECO:0007669"/>
    <property type="project" value="Ensembl"/>
</dbReference>
<dbReference type="GO" id="GO:0001568">
    <property type="term" value="P:blood vessel development"/>
    <property type="evidence" value="ECO:0000315"/>
    <property type="project" value="UniProtKB"/>
</dbReference>
<dbReference type="GO" id="GO:0030282">
    <property type="term" value="P:bone mineralization"/>
    <property type="evidence" value="ECO:0007669"/>
    <property type="project" value="Ensembl"/>
</dbReference>
<dbReference type="GO" id="GO:0071230">
    <property type="term" value="P:cellular response to amino acid stimulus"/>
    <property type="evidence" value="ECO:0007669"/>
    <property type="project" value="Ensembl"/>
</dbReference>
<dbReference type="GO" id="GO:0030199">
    <property type="term" value="P:collagen fibril organization"/>
    <property type="evidence" value="ECO:0000315"/>
    <property type="project" value="UniProtKB"/>
</dbReference>
<dbReference type="GO" id="GO:0032963">
    <property type="term" value="P:collagen metabolic process"/>
    <property type="evidence" value="ECO:0007669"/>
    <property type="project" value="Ensembl"/>
</dbReference>
<dbReference type="GO" id="GO:0085029">
    <property type="term" value="P:extracellular matrix assembly"/>
    <property type="evidence" value="ECO:0007669"/>
    <property type="project" value="Ensembl"/>
</dbReference>
<dbReference type="GO" id="GO:0042476">
    <property type="term" value="P:odontogenesis"/>
    <property type="evidence" value="ECO:0000303"/>
    <property type="project" value="UniProtKB"/>
</dbReference>
<dbReference type="GO" id="GO:0070208">
    <property type="term" value="P:protein heterotrimerization"/>
    <property type="evidence" value="ECO:0007669"/>
    <property type="project" value="Ensembl"/>
</dbReference>
<dbReference type="GO" id="GO:0008217">
    <property type="term" value="P:regulation of blood pressure"/>
    <property type="evidence" value="ECO:0000315"/>
    <property type="project" value="UniProtKB"/>
</dbReference>
<dbReference type="GO" id="GO:0007266">
    <property type="term" value="P:Rho protein signal transduction"/>
    <property type="evidence" value="ECO:0000314"/>
    <property type="project" value="UniProtKB"/>
</dbReference>
<dbReference type="GO" id="GO:0001501">
    <property type="term" value="P:skeletal system development"/>
    <property type="evidence" value="ECO:0000315"/>
    <property type="project" value="UniProtKB"/>
</dbReference>
<dbReference type="GO" id="GO:0043589">
    <property type="term" value="P:skin morphogenesis"/>
    <property type="evidence" value="ECO:0000315"/>
    <property type="project" value="UniProtKB"/>
</dbReference>
<dbReference type="GO" id="GO:0007179">
    <property type="term" value="P:transforming growth factor beta receptor signaling pathway"/>
    <property type="evidence" value="ECO:0000314"/>
    <property type="project" value="UniProtKB"/>
</dbReference>
<dbReference type="FunFam" id="2.60.120.1000:FF:000001">
    <property type="entry name" value="Collagen alpha-1 type I chain"/>
    <property type="match status" value="1"/>
</dbReference>
<dbReference type="Gene3D" id="2.60.120.1000">
    <property type="match status" value="1"/>
</dbReference>
<dbReference type="InterPro" id="IPR008160">
    <property type="entry name" value="Collagen"/>
</dbReference>
<dbReference type="InterPro" id="IPR050149">
    <property type="entry name" value="Collagen_superfamily"/>
</dbReference>
<dbReference type="InterPro" id="IPR000885">
    <property type="entry name" value="Fib_collagen_C"/>
</dbReference>
<dbReference type="PANTHER" id="PTHR24023">
    <property type="entry name" value="COLLAGEN ALPHA"/>
    <property type="match status" value="1"/>
</dbReference>
<dbReference type="PANTHER" id="PTHR24023:SF1082">
    <property type="entry name" value="COLLAGEN TRIPLE HELIX REPEAT"/>
    <property type="match status" value="1"/>
</dbReference>
<dbReference type="Pfam" id="PF01410">
    <property type="entry name" value="COLFI"/>
    <property type="match status" value="1"/>
</dbReference>
<dbReference type="Pfam" id="PF01391">
    <property type="entry name" value="Collagen"/>
    <property type="match status" value="8"/>
</dbReference>
<dbReference type="SMART" id="SM00038">
    <property type="entry name" value="COLFI"/>
    <property type="match status" value="1"/>
</dbReference>
<dbReference type="PROSITE" id="PS51461">
    <property type="entry name" value="NC1_FIB"/>
    <property type="match status" value="1"/>
</dbReference>
<evidence type="ECO:0000250" key="1"/>
<evidence type="ECO:0000250" key="2">
    <source>
        <dbReference type="UniProtKB" id="P02466"/>
    </source>
</evidence>
<evidence type="ECO:0000250" key="3">
    <source>
        <dbReference type="UniProtKB" id="Q03692"/>
    </source>
</evidence>
<evidence type="ECO:0000255" key="4"/>
<evidence type="ECO:0000255" key="5">
    <source>
        <dbReference type="PROSITE-ProRule" id="PRU00793"/>
    </source>
</evidence>
<evidence type="ECO:0000256" key="6">
    <source>
        <dbReference type="SAM" id="MobiDB-lite"/>
    </source>
</evidence>
<evidence type="ECO:0000269" key="7">
    <source>
    </source>
</evidence>
<evidence type="ECO:0000269" key="8">
    <source>
    </source>
</evidence>
<evidence type="ECO:0000269" key="9">
    <source>
    </source>
</evidence>
<evidence type="ECO:0000269" key="10">
    <source>
    </source>
</evidence>
<evidence type="ECO:0000269" key="11">
    <source>
    </source>
</evidence>
<evidence type="ECO:0000269" key="12">
    <source>
    </source>
</evidence>
<evidence type="ECO:0000269" key="13">
    <source>
    </source>
</evidence>
<evidence type="ECO:0000269" key="14">
    <source>
    </source>
</evidence>
<evidence type="ECO:0000269" key="15">
    <source>
    </source>
</evidence>
<evidence type="ECO:0000269" key="16">
    <source>
    </source>
</evidence>
<evidence type="ECO:0000269" key="17">
    <source>
    </source>
</evidence>
<evidence type="ECO:0000269" key="18">
    <source>
    </source>
</evidence>
<evidence type="ECO:0000269" key="19">
    <source>
    </source>
</evidence>
<evidence type="ECO:0000269" key="20">
    <source>
    </source>
</evidence>
<evidence type="ECO:0000269" key="21">
    <source>
    </source>
</evidence>
<evidence type="ECO:0000269" key="22">
    <source>
    </source>
</evidence>
<evidence type="ECO:0000269" key="23">
    <source>
    </source>
</evidence>
<evidence type="ECO:0000269" key="24">
    <source>
    </source>
</evidence>
<evidence type="ECO:0000269" key="25">
    <source>
    </source>
</evidence>
<evidence type="ECO:0000269" key="26">
    <source>
    </source>
</evidence>
<evidence type="ECO:0000269" key="27">
    <source>
    </source>
</evidence>
<evidence type="ECO:0000269" key="28">
    <source>
    </source>
</evidence>
<evidence type="ECO:0000269" key="29">
    <source>
    </source>
</evidence>
<evidence type="ECO:0000269" key="30">
    <source>
    </source>
</evidence>
<evidence type="ECO:0000269" key="31">
    <source>
    </source>
</evidence>
<evidence type="ECO:0000269" key="32">
    <source>
    </source>
</evidence>
<evidence type="ECO:0000269" key="33">
    <source>
    </source>
</evidence>
<evidence type="ECO:0000269" key="34">
    <source>
    </source>
</evidence>
<evidence type="ECO:0000269" key="35">
    <source>
    </source>
</evidence>
<evidence type="ECO:0000269" key="36">
    <source>
    </source>
</evidence>
<evidence type="ECO:0000269" key="37">
    <source>
    </source>
</evidence>
<evidence type="ECO:0000269" key="38">
    <source>
    </source>
</evidence>
<evidence type="ECO:0000269" key="39">
    <source>
    </source>
</evidence>
<evidence type="ECO:0000269" key="40">
    <source>
    </source>
</evidence>
<evidence type="ECO:0000269" key="41">
    <source>
    </source>
</evidence>
<evidence type="ECO:0000269" key="42">
    <source>
    </source>
</evidence>
<evidence type="ECO:0000269" key="43">
    <source>
    </source>
</evidence>
<evidence type="ECO:0000269" key="44">
    <source>
    </source>
</evidence>
<evidence type="ECO:0000269" key="45">
    <source>
    </source>
</evidence>
<evidence type="ECO:0000269" key="46">
    <source>
    </source>
</evidence>
<evidence type="ECO:0000269" key="47">
    <source>
    </source>
</evidence>
<evidence type="ECO:0000269" key="48">
    <source>
    </source>
</evidence>
<evidence type="ECO:0000269" key="49">
    <source>
    </source>
</evidence>
<evidence type="ECO:0000269" key="50">
    <source>
    </source>
</evidence>
<evidence type="ECO:0000269" key="51">
    <source>
    </source>
</evidence>
<evidence type="ECO:0000269" key="52">
    <source>
    </source>
</evidence>
<evidence type="ECO:0000269" key="53">
    <source>
    </source>
</evidence>
<evidence type="ECO:0000269" key="54">
    <source>
    </source>
</evidence>
<evidence type="ECO:0000269" key="55">
    <source>
    </source>
</evidence>
<evidence type="ECO:0000269" key="56">
    <source>
    </source>
</evidence>
<evidence type="ECO:0000269" key="57">
    <source>
    </source>
</evidence>
<evidence type="ECO:0000269" key="58">
    <source>
    </source>
</evidence>
<evidence type="ECO:0000269" key="59">
    <source>
    </source>
</evidence>
<evidence type="ECO:0000269" key="60">
    <source>
    </source>
</evidence>
<evidence type="ECO:0000269" key="61">
    <source>
    </source>
</evidence>
<evidence type="ECO:0000269" key="62">
    <source>
    </source>
</evidence>
<evidence type="ECO:0000269" key="63">
    <source>
    </source>
</evidence>
<evidence type="ECO:0000269" key="64">
    <source>
    </source>
</evidence>
<evidence type="ECO:0000269" key="65">
    <source>
    </source>
</evidence>
<evidence type="ECO:0000269" key="66">
    <source>
    </source>
</evidence>
<evidence type="ECO:0000269" key="67">
    <source>
    </source>
</evidence>
<evidence type="ECO:0000269" key="68">
    <source>
    </source>
</evidence>
<evidence type="ECO:0000269" key="69">
    <source>
    </source>
</evidence>
<evidence type="ECO:0000269" key="70">
    <source>
    </source>
</evidence>
<evidence type="ECO:0000269" key="71">
    <source>
    </source>
</evidence>
<evidence type="ECO:0000269" key="72">
    <source ref="35"/>
</evidence>
<evidence type="ECO:0000305" key="73"/>
<protein>
    <recommendedName>
        <fullName>Collagen alpha-2(I) chain</fullName>
    </recommendedName>
    <alternativeName>
        <fullName>Alpha-2 type I collagen</fullName>
    </alternativeName>
</protein>
<organism>
    <name type="scientific">Homo sapiens</name>
    <name type="common">Human</name>
    <dbReference type="NCBI Taxonomy" id="9606"/>
    <lineage>
        <taxon>Eukaryota</taxon>
        <taxon>Metazoa</taxon>
        <taxon>Chordata</taxon>
        <taxon>Craniata</taxon>
        <taxon>Vertebrata</taxon>
        <taxon>Euteleostomi</taxon>
        <taxon>Mammalia</taxon>
        <taxon>Eutheria</taxon>
        <taxon>Euarchontoglires</taxon>
        <taxon>Primates</taxon>
        <taxon>Haplorrhini</taxon>
        <taxon>Catarrhini</taxon>
        <taxon>Hominidae</taxon>
        <taxon>Homo</taxon>
    </lineage>
</organism>
<accession>P08123</accession>
<accession>P02464</accession>
<accession>Q13897</accession>
<accession>Q13997</accession>
<accession>Q13998</accession>
<accession>Q14038</accession>
<accession>Q14057</accession>
<accession>Q15177</accession>
<accession>Q15947</accession>
<accession>Q16480</accession>
<accession>Q16511</accession>
<accession>Q7Z5S6</accession>
<accession>Q9UEB6</accession>
<accession>Q9UEF9</accession>
<accession>Q9UM83</accession>
<accession>Q9UMI1</accession>
<accession>Q9UML5</accession>
<accession>Q9UMM6</accession>
<accession>Q9UPH0</accession>
<sequence>MLSFVDTRTLLLLAVTLCLATCQSLQEETVRKGPAGDRGPRGERGPPGPPGRDGEDGPTGPPGPPGPPGPPGLGGNFAAQYDGKGVGLGPGPMGLMGPRGPPGAAGAPGPQGFQGPAGEPGEPGQTGPAGARGPAGPPGKAGEDGHPGKPGRPGERGVVGPQGARGFPGTPGLPGFKGIRGHNGLDGLKGQPGAPGVKGEPGAPGENGTPGQTGARGLPGERGRVGAPGPAGARGSDGSVGPVGPAGPIGSAGPPGFPGAPGPKGEIGAVGNAGPAGPAGPRGEVGLPGLSGPVGPPGNPGANGLTGAKGAAGLPGVAGAPGLPGPRGIPGPVGAAGATGARGLVGEPGPAGSKGESGNKGEPGSAGPQGPPGPSGEEGKRGPNGEAGSAGPPGPPGLRGSPGSRGLPGADGRAGVMGPPGSRGASGPAGVRGPNGDAGRPGEPGLMGPRGLPGSPGNIGPAGKEGPVGLPGIDGRPGPIGPAGARGEPGNIGFPGPKGPTGDPGKNGDKGHAGLAGARGAPGPDGNNGAQGPPGPQGVQGGKGEQGPPGPPGFQGLPGPSGPAGEVGKPGERGLHGEFGLPGPAGPRGERGPPGESGAAGPTGPIGSRGPSGPPGPDGNKGEPGVVGAVGTAGPSGPSGLPGERGAAGIPGGKGEKGEPGLRGEIGNPGRDGARGAPGAVGAPGPAGATGDRGEAGAAGPAGPAGPRGSPGERGEVGPAGPNGFAGPAGAAGQPGAKGERGAKGPKGENGVVGPTGPVGAAGPAGPNGPPGPAGSRGDGGPPGMTGFPGAAGRTGPPGPSGISGPPGPPGPAGKEGLRGPRGDQGPVGRTGEVGAVGPPGFAGEKGPSGEAGTAGPPGTPGPQGLLGAPGILGLPGSRGERGLPGVAGAVGEPGPLGIAGPPGARGPPGAVGSPGVNGAPGEAGRDGNPGNDGPPGRDGQPGHKGERGYPGNIGPVGAAGAPGPHGPVGPAGKHGNRGETGPSGPVGPAGAVGPRGPSGPQGIRGDKGEPGEKGPRGLPGLKGHNGLQGLPGIAGHHGDQGAPGSVGPAGPRGPAGPSGPAGKDGRTGHPGTVGPAGIRGPQGHQGPAGPPGPPGPPGPPGVSGGGYDFGYDGDFYRADQPRSAPSLRPKDYEVDATLKSLNNQIETLLTPEGSRKNPARTCRDLRLSHPEWSSGYYWIDPNQGCTMDAIKVYCDFSTGETCIRAQPENIPAKNWYRSSKDKKHVWLGETINAGSQFEYNVEGVTSKEMATQLAFMRLLANYASQNITYHCKNSIAYMDEETGNLKKAVILQGSNDVELVAEGNSRFTYTVLVDGCSKKTNEWGKTIIEYKTNKPSRLPFLDIAPLDIGGADQEFFVDIGPVCFK</sequence>
<proteinExistence type="evidence at protein level"/>
<reference key="1">
    <citation type="journal article" date="1987" name="J. Biol. Chem.">
        <title>Organization of the human pro-alpha 2(I) collagen gene.</title>
        <authorList>
            <person name="de Wet W.J."/>
            <person name="Bernard M.P."/>
            <person name="Benson-Chanda V."/>
            <person name="Chu M.-L."/>
            <person name="Dickson L.A."/>
            <person name="Weil D."/>
            <person name="Ramirez F."/>
        </authorList>
    </citation>
    <scope>NUCLEOTIDE SEQUENCE [MRNA]</scope>
    <scope>VARIANTS ASN-249; THR-276; VAL-483; ALA-549; HIS-678; GLY-743; PHE-1022; GLU-1189; PRO-1198 AND HIS-1354</scope>
</reference>
<reference key="2">
    <citation type="journal article" date="1997" name="Nucleic Acids Res.">
        <title>The human type I collagen mutation database.</title>
        <authorList>
            <person name="Dalgleish R."/>
        </authorList>
    </citation>
    <scope>NUCLEOTIDE SEQUENCE [MRNA]</scope>
    <scope>REVIEW ON OI VARIANTS</scope>
    <scope>VARIANTS ALA-549; HIS-678 AND HIS-1354</scope>
</reference>
<reference key="3">
    <citation type="journal article" date="1998" name="Am. J. Hum. Genet.">
        <title>Analysis of the COL1A1 and COL1A2 genes by PCR amplification and scanning by conformation-sensitive gel electrophoresis identifies only COL1A1 mutations in 15 patients with osteogenesis imperfecta type I: identification of common sequences of null-allele mutations.</title>
        <authorList>
            <person name="Korkko J.M."/>
            <person name="Ala-Kokko L."/>
            <person name="De Paepe A."/>
            <person name="Nuytinck L."/>
            <person name="Earley J.J."/>
            <person name="Prockop D.J."/>
        </authorList>
    </citation>
    <scope>NUCLEOTIDE SEQUENCE [GENOMIC DNA]</scope>
    <scope>VARIANTS ILE-270; VAL-483; HIS-678; GLY-743; PHE-1022; GLU-1189; PRO-1198 AND HIS-1354</scope>
</reference>
<reference key="4">
    <citation type="journal article" date="2004" name="Genome Res.">
        <title>The status, quality, and expansion of the NIH full-length cDNA project: the Mammalian Gene Collection (MGC).</title>
        <authorList>
            <consortium name="The MGC Project Team"/>
        </authorList>
    </citation>
    <scope>NUCLEOTIDE SEQUENCE [LARGE SCALE MRNA]</scope>
    <scope>VARIANT ALA-549</scope>
    <source>
        <tissue>Skin</tissue>
        <tissue>Uterus</tissue>
    </source>
</reference>
<reference key="5">
    <citation type="journal article" date="1988" name="Biochem. J.">
        <title>Structure of a full-length cDNA clone for the prepro alpha 2(I) chain of human type I procollagen. Comparison with the chicken gene confirms unusual patterns of gene conservation.</title>
        <authorList>
            <person name="Kuivaniemi H."/>
            <person name="Tromp G."/>
            <person name="Chu M.-L."/>
            <person name="Prockop D.J."/>
        </authorList>
    </citation>
    <scope>NUCLEOTIDE SEQUENCE [MRNA] OF 1-765</scope>
    <scope>VARIANTS HIS-678 AND GLY-743</scope>
    <source>
        <tissue>Placenta</tissue>
    </source>
</reference>
<reference key="6">
    <citation type="journal article" date="1985" name="Nucleic Acids Res.">
        <title>Analysis of the promoter region and the N-propeptide domain of the human pro alpha 2(I) collagen gene.</title>
        <authorList>
            <person name="Dickson L.A."/>
            <person name="de Wet W."/>
            <person name="Di Liberto M."/>
            <person name="Weil D."/>
            <person name="Ramirez F."/>
        </authorList>
    </citation>
    <scope>NUCLEOTIDE SEQUENCE [MRNA] OF 1-93</scope>
    <scope>VARIANT PRO-59</scope>
</reference>
<reference key="7">
    <citation type="journal article" date="1998" name="Connect. Tissue Res.">
        <title>Fine structural analysis of the unique 5' region of the human COL1A2 gene containing two regions of dinucleotide repeats adjacent to the transcriptional start site.</title>
        <authorList>
            <person name="Akai J."/>
            <person name="Kimura A."/>
            <person name="Arai K."/>
            <person name="Uehara K."/>
            <person name="Hata R."/>
        </authorList>
    </citation>
    <scope>NUCLEOTIDE SEQUENCE [GENOMIC DNA] OF 1-32</scope>
</reference>
<reference key="8">
    <citation type="journal article" date="1987" name="J. Biol. Chem.">
        <title>Ehlers-Danlos syndrome type VIIB. Deletion of 18 amino acids comprising the N-telopeptide region of a pro-alpha 2(I) chain.</title>
        <authorList>
            <person name="Wirtz M.K."/>
            <person name="Glanville R.W."/>
            <person name="Steinmann B."/>
            <person name="Rao V.H."/>
            <person name="Hollister D.W."/>
        </authorList>
    </citation>
    <scope>PROTEIN SEQUENCE OF 32-111</scope>
    <scope>HYDROXYLATION AT PRO-47; PRO-50; PRO-62; PRO-65; PRO-68; PRO-71; PRO-102 AND PRO-108</scope>
    <scope>VARIANT EDSARTH2 76-ASN--MET-93 DEL</scope>
</reference>
<reference key="9">
    <citation type="journal article" date="1990" name="J. Biol. Chem.">
        <title>Structural and functional characterization of a splicing mutation in the pro-alpha 2(I) collagen gene of an Ehlers-Danlos type VII patient.</title>
        <authorList>
            <person name="Weil D."/>
            <person name="D'Alessio M."/>
            <person name="Ramirez F."/>
            <person name="Eyre D.R."/>
        </authorList>
    </citation>
    <scope>NUCLEOTIDE SEQUENCE [GENOMIC DNA] OF 76-93</scope>
    <scope>PROTEIN SEQUENCE OF 23-96</scope>
    <scope>HYDROXYLATION AT PRO-47; PRO-50; PRO-62; PRO-65; PRO-68 AND PRO-71</scope>
    <scope>PYROGLUTAMATE FORMATION AT GLN-23</scope>
    <scope>VARIANT EDSARTH2 76-ASN--MET-93 DEL</scope>
</reference>
<reference key="10">
    <citation type="journal article" date="1992" name="J. Biol. Chem.">
        <title>Ehlers Danlos syndrome type VIIB. Incomplete cleavage of abnormal type I procollagen by N-proteinase in vitro results in the formation of copolymers of collagen and partially cleaved pNcollagen that are near circular in cross-section.</title>
        <authorList>
            <person name="Watson R.B."/>
            <person name="Wallis G.A."/>
            <person name="Holmes D.F."/>
            <person name="Viljoen D."/>
            <person name="Byers P.H."/>
            <person name="Kadler K.E."/>
        </authorList>
    </citation>
    <scope>NUCLEOTIDE SEQUENCE [GENOMIC DNA] OF 76-93</scope>
    <scope>VARIANT EDSARTH2 76-ASN--MET-93 DEL</scope>
</reference>
<reference key="11">
    <citation type="journal article" date="1970" name="Biochemistry">
        <title>Isolation and characterization of the cyanogen bromide peptides from the alpha 1 and alpha 2 chains of human skin collagen.</title>
        <authorList>
            <person name="Click E.M."/>
            <person name="Bornstein P."/>
        </authorList>
    </citation>
    <scope>PROTEIN SEQUENCE OF 80-96</scope>
    <scope>ALLYSINE AT LYS-84</scope>
    <scope>PYROGLUTAMATE FORMATION AT GLN-80</scope>
    <source>
        <tissue>Skin</tissue>
    </source>
</reference>
<reference key="12">
    <citation type="journal article" date="1988" name="J. Biol. Chem.">
        <title>A 19-base pair deletion in the pro-alpha 2(I) gene of type I procollagen that causes in-frame RNA splicing from exon 10 to exon 12 in a proband with atypical osteogenesis imperfecta and in his asymptomatic mother.</title>
        <authorList>
            <person name="Kuivaniemi H."/>
            <person name="Sabol C."/>
            <person name="Tromp G."/>
            <person name="Sippola-Thiele M."/>
            <person name="Prockop D.J."/>
        </authorList>
    </citation>
    <scope>NUCLEOTIDE SEQUENCE [GENOMIC DNA] OF 145-198</scope>
</reference>
<reference key="13">
    <citation type="journal article" date="1992" name="J. Bone Miner. Res.">
        <title>Expression of mutant alpha (I)-procollagen in osteoblast and fibroblast cultures from a proband with osteogenesis imperfecta type IV.</title>
        <authorList>
            <person name="Chipman S.D."/>
            <person name="Shapiro J.R."/>
            <person name="McKinstry M.B."/>
            <person name="Stover M.L."/>
            <person name="Branson P."/>
            <person name="Rowe D.W."/>
        </authorList>
    </citation>
    <scope>NUCLEOTIDE SEQUENCE [MRNA] OF 163-213</scope>
    <scope>VARIANT OI4 181-GLY--LYS-198 DEL</scope>
</reference>
<reference key="14">
    <citation type="journal article" date="1970" name="J. Biol. Chem.">
        <title>A comparative study of glycopeptides derived from selected vertebrate collagens. A possible role of the carbohydrate in fibril formation.</title>
        <authorList>
            <person name="Morgan P.H."/>
            <person name="Jacobs H.G."/>
            <person name="Segrest J.P."/>
            <person name="Cunningham L.W."/>
        </authorList>
    </citation>
    <scope>PROTEIN SEQUENCE OF 175-180</scope>
    <scope>HYDROXYLATION AT LYS-177</scope>
    <scope>GLYCOSYLATION AT LYS-177</scope>
    <source>
        <tissue>Skin</tissue>
    </source>
</reference>
<reference key="15">
    <citation type="submission" date="1997-09" db="EMBL/GenBank/DDBJ databases">
        <authorList>
            <person name="Kalicki J."/>
            <person name="Wamsley P."/>
            <person name="Gibson A."/>
        </authorList>
    </citation>
    <scope>NUCLEOTIDE SEQUENCE [GENOMIC DNA] OF 181-1366</scope>
</reference>
<reference key="16">
    <citation type="journal article" date="1974" name="Eur. J. Biochem.">
        <title>Comparative sequence studies on alpha2-CB2 from calf, human, rabbit and pig-skin collagen.</title>
        <authorList>
            <person name="Fietzek P.P."/>
            <person name="Furthmayr H."/>
            <person name="Kuehn K."/>
        </authorList>
    </citation>
    <scope>PROTEIN SEQUENCE OF 417-447</scope>
    <scope>HYDROXYLATION AT PRO-420; PRO-441 AND PRO-444</scope>
    <source>
        <tissue>Skin</tissue>
    </source>
</reference>
<reference key="17">
    <citation type="journal article" date="1988" name="Proc. Natl. Acad. Sci. U.S.A.">
        <title>Single base mutation in the pro alpha 2(I) collagen gene that causes efficient splicing of RNA from exon 27 to exon 29 and synthesis of a shortened but in-frame pro alpha 2(I) chain.</title>
        <authorList>
            <person name="Tromp G."/>
            <person name="Prockop D.J."/>
        </authorList>
    </citation>
    <scope>NUCLEOTIDE SEQUENCE [GENOMIC DNA] OF 520-573</scope>
    <scope>VARIANT ALA-549</scope>
</reference>
<reference key="18">
    <citation type="journal article" date="1984" name="J. Invest. Dermatol.">
        <title>Isolation and characterization of a human pro alpha 2(I) collagen gene segment.</title>
        <authorList>
            <person name="Tajima S."/>
            <person name="Ting J.P."/>
            <person name="Pinnell S.R."/>
            <person name="Kaufman R.E."/>
        </authorList>
    </citation>
    <scope>NUCLEOTIDE SEQUENCE [GENOMIC DNA] OF 622-657</scope>
</reference>
<reference key="19">
    <citation type="journal article" date="1983" name="Biochemistry">
        <title>Structure of a cDNA for the pro alpha 2 chain of human type I procollagen. Comparison with chick cDNA for pro alpha 2(I) identifies structurally conserved features of the protein and the gene.</title>
        <authorList>
            <person name="Bernard M.P."/>
            <person name="Myers J.C."/>
            <person name="Chu M.-L."/>
            <person name="Ramirez F."/>
            <person name="Eikenberry E.F."/>
            <person name="Prockop D.J."/>
        </authorList>
    </citation>
    <scope>NUCLEOTIDE SEQUENCE [MRNA] OF 623-1366</scope>
    <scope>VARIANTS HIS-678; PHE-1022; GLU-1189; PRO-1198 AND HIS-1354</scope>
</reference>
<reference key="20">
    <citation type="journal article" date="1992" name="J. Biol. Chem.">
        <title>Defective folding and stable association with protein disulfide isomerase/prolyl hydroxylase of type I procollagen with a deletion in the pro alpha 2(I) chain that preserves the Gly-X-Y repeat pattern.</title>
        <authorList>
            <person name="Chessler S.D."/>
            <person name="Byers P.H."/>
        </authorList>
    </citation>
    <scope>NUCLEOTIDE SEQUENCE [MRNA] OF 631-864</scope>
    <scope>VARIANT OI2 676-GLY--ALA-855 DEL</scope>
</reference>
<reference key="21">
    <citation type="journal article" date="1994" name="Hum. Mol. Genet.">
        <title>Severe (type III) osteogenesis imperfecta due to glycine substitutions in the central domain of the collagen triple helix.</title>
        <authorList>
            <person name="Forlino A."/>
            <person name="Zolezzi F."/>
            <person name="Valli M."/>
            <person name="Pignatti P.F."/>
            <person name="Cetta G."/>
            <person name="Brunelli P.C."/>
            <person name="Mottes M."/>
        </authorList>
    </citation>
    <scope>NUCLEOTIDE SEQUENCE [MRNA] OF 663-746</scope>
    <scope>VARIANT OI3 VAL-676</scope>
</reference>
<reference key="22">
    <citation type="journal article" date="1990" name="Biochim. Biophys. Acta">
        <title>Growth-dependent modulation of type I collagen production and mRNA levels in cultured human skin fibroblasts.</title>
        <authorList>
            <person name="Maekelae J.K."/>
            <person name="Vuorio T."/>
            <person name="Vuorio E."/>
        </authorList>
    </citation>
    <scope>NUCLEOTIDE SEQUENCE [MRNA] OF 960-1356</scope>
    <scope>VARIANT HIS-1354</scope>
    <source>
        <tissue>Skin</tissue>
    </source>
</reference>
<reference key="23">
    <citation type="journal article" date="1981" name="Proc. Natl. Acad. Sci. U.S.A.">
        <title>Cloning a cDNA for the pro-alpha 2 chain of human type I collagen.</title>
        <authorList>
            <person name="Myers J.C."/>
            <person name="Chu M.-L."/>
            <person name="Faro S.H."/>
            <person name="Clark W.J."/>
            <person name="Prockop D.J."/>
            <person name="Ramirez F."/>
        </authorList>
    </citation>
    <scope>NUCLEOTIDE SEQUENCE [MRNA] OF 964-1019</scope>
</reference>
<reference key="24">
    <citation type="journal article" date="1988" name="J. Biol. Chem.">
        <title>Arginine for glycine substitution in the triple-helical domain of the products of one alpha 2(I) collagen allele (COL1A2) produces the osteogenesis imperfecta type IV phenotype.</title>
        <authorList>
            <person name="Wenstrup R.J."/>
            <person name="Cohn D.H."/>
            <person name="Cohen T."/>
            <person name="Byers P.H."/>
        </authorList>
    </citation>
    <scope>NUCLEOTIDE SEQUENCE [GENOMIC DNA / MRNA] OF 1090-1107</scope>
    <scope>VARIANT OI4 ARG-1102</scope>
</reference>
<reference key="25">
    <citation type="journal article" date="1983" name="J. Biol. Chem.">
        <title>Analysis of the 3' end of the human pro-alpha 2(I) collagen gene. Utilization of multiple polyadenylation sites in cultured fibroblasts.</title>
        <authorList>
            <person name="Myers J.C."/>
            <person name="Dickson L.A."/>
            <person name="de Wet W.J."/>
            <person name="Bernard M.P."/>
            <person name="Chu M.-L."/>
            <person name="Di Liberto M."/>
            <person name="Pepe G."/>
            <person name="Sangiorgi F.O."/>
            <person name="Ramirez F."/>
        </authorList>
    </citation>
    <scope>NUCLEOTIDE SEQUENCE [GENOMIC DNA] OF 1319-1366</scope>
    <scope>VARIANT HIS-1354</scope>
</reference>
<reference key="26">
    <citation type="journal article" date="1984" name="J. Biol. Chem.">
        <title>Osteogenesis imperfecta: cloning of a pro-alpha 2(I) collagen gene with a frameshift mutation.</title>
        <authorList>
            <person name="Pihlajaniemi T."/>
            <person name="Dickson L.A."/>
            <person name="Pope F.M."/>
            <person name="Korhonen V.R."/>
            <person name="Nicholls A."/>
            <person name="Prockop D.J."/>
            <person name="Myers J.C."/>
        </authorList>
    </citation>
    <scope>NUCLEOTIDE SEQUENCE [GENOMIC DNA] OF 1319-1366</scope>
    <scope>VARIANT HIS-1354</scope>
    <source>
        <tissue>Skin</tissue>
    </source>
</reference>
<reference key="27">
    <citation type="journal article" date="1991" name="FASEB J.">
        <title>Mutations in collagen genes: causes of rare and some common diseases in humans.</title>
        <authorList>
            <person name="Kuivaniemi H."/>
            <person name="Tromp G."/>
            <person name="Prockop D.J."/>
        </authorList>
    </citation>
    <scope>REVIEW ON VARIANTS</scope>
</reference>
<reference key="28">
    <citation type="journal article" date="1997" name="Hum. Mutat.">
        <title>Mutations in fibrillar collagens (types I, II, III, and XI), fibril-associated collagen (type IX), and network-forming collagen (type X) cause a spectrum of diseases of bone, cartilage, and blood vessels.</title>
        <authorList>
            <person name="Kuivaniemi H."/>
            <person name="Tromp G."/>
            <person name="Prockop D.J."/>
        </authorList>
    </citation>
    <scope>REVIEW ON VARIANTS</scope>
</reference>
<reference key="29">
    <citation type="journal article" date="1991" name="J. Med. Genet.">
        <title>Osteogenesis imperfecta: translation of mutation to phenotype.</title>
        <authorList>
            <person name="Byers P.H."/>
            <person name="Wallis G.A."/>
            <person name="Willing M.C."/>
        </authorList>
    </citation>
    <scope>REVIEW ON OI VARIANTS</scope>
</reference>
<reference key="30">
    <citation type="journal article" date="2012" name="J. Proteome Res.">
        <title>Resveratrol-induced changes of the human adipocyte secretion profile.</title>
        <authorList>
            <person name="Rosenow A."/>
            <person name="Noben J.P."/>
            <person name="Jocken J."/>
            <person name="Kallendrusch S."/>
            <person name="Fischer-Posovszky P."/>
            <person name="Mariman E.C."/>
            <person name="Renes J."/>
        </authorList>
    </citation>
    <scope>IDENTIFICATION BY MASS SPECTROMETRY [LARGE SCALE ANALYSIS]</scope>
</reference>
<reference key="31">
    <citation type="journal article" date="2014" name="J. Proteomics">
        <title>An enzyme assisted RP-RPLC approach for in-depth analysis of human liver phosphoproteome.</title>
        <authorList>
            <person name="Bian Y."/>
            <person name="Song C."/>
            <person name="Cheng K."/>
            <person name="Dong M."/>
            <person name="Wang F."/>
            <person name="Huang J."/>
            <person name="Sun D."/>
            <person name="Wang L."/>
            <person name="Ye M."/>
            <person name="Zou H."/>
        </authorList>
    </citation>
    <scope>IDENTIFICATION BY MASS SPECTROMETRY [LARGE SCALE ANALYSIS]</scope>
    <source>
        <tissue>Liver</tissue>
    </source>
</reference>
<reference key="32">
    <citation type="journal article" date="2020" name="Sci. Adv.">
        <title>Broadly conserved roles of TMEM131 family proteins in intracellular collagen assembly and secretory cargo trafficking.</title>
        <authorList>
            <person name="Zhang Z."/>
            <person name="Bai M."/>
            <person name="Barbosa G.O."/>
            <person name="Chen A."/>
            <person name="Wei Y."/>
            <person name="Luo S."/>
            <person name="Wang X."/>
            <person name="Wang B."/>
            <person name="Tsukui T."/>
            <person name="Li H."/>
            <person name="Sheppard D."/>
            <person name="Kornberg T.B."/>
            <person name="Ma D.K."/>
        </authorList>
    </citation>
    <scope>INTERACTION WITH TMEM131</scope>
</reference>
<reference key="33">
    <citation type="journal article" date="1989" name="J. Biol. Chem.">
        <title>A single base mutation that converts glycine 907 of the alpha 2(I) chain of type I procollagen to aspartate in a lethal variant of osteogenesis imperfecta. The single amino acid substitution near the carboxyl terminus destabilizes the whole triple helix.</title>
        <authorList>
            <person name="Baldwin C.T."/>
            <person name="Constantinou C."/>
            <person name="Dumars K.W."/>
            <person name="Prockop D.J."/>
        </authorList>
    </citation>
    <scope>VARIANT OI2 ASP-997</scope>
</reference>
<reference key="34">
    <citation type="journal article" date="1989" name="J. Biol. Chem.">
        <title>Characterization of point mutations in the collagen COL1A1 and COL1A2 genes causing lethal perinatal osteogenesis imperfecta.</title>
        <authorList>
            <person name="Lamande S.R."/>
            <person name="Dahl H.-H.M."/>
            <person name="Cole W.G."/>
            <person name="Bateman J.F."/>
        </authorList>
    </citation>
    <scope>VARIANT OI2 SER-955</scope>
</reference>
<reference key="35">
    <citation type="journal article" date="1990" name="Am. J. Hum. Genet.">
        <title>Two cysteine substitutions in the type I procollagen genes (COL1A1 and COL1A2) that cause lethal osteogenesis imperfecta. The location of glycine substitutions does not in any simple way predict their effects on protein function or phenotype.</title>
        <authorList>
            <person name="Fertala A."/>
            <person name="Westerhausen A."/>
            <person name="Morris G.M."/>
            <person name="Rooney J.E."/>
            <person name="Prockop D.J."/>
        </authorList>
    </citation>
    <scope>VARIANT OI2 CYS-877</scope>
</reference>
<reference key="36">
    <citation type="journal article" date="1990" name="Nucleic Acids Res.">
        <title>Detection of point mutations in type I collagen by RNase digestion of RNA/RNA hybrids.</title>
        <authorList>
            <person name="Grange D.K."/>
            <person name="Gottesman G.S."/>
            <person name="Lewis M.B."/>
            <person name="Marini J.C."/>
        </authorList>
    </citation>
    <scope>VARIANTS OI2 ASP-895 AND CYS-1078</scope>
</reference>
<reference key="37">
    <citation type="journal article" date="1991" name="Biochem. J.">
        <title>Characterization of a type I collagen alpha 2(I) glycine-586 to valine substitution in osteogenesis imperfecta type IV. Detection of the mutation and prenatal diagnosis by a chemical cleavage method.</title>
        <authorList>
            <person name="Bateman J.F."/>
            <person name="Hannagan M."/>
            <person name="Chan D."/>
            <person name="Cole W.G."/>
        </authorList>
    </citation>
    <scope>VARIANT OI4 VAL-676</scope>
</reference>
<reference key="38">
    <citation type="journal article" date="1991" name="J. Biol. Chem.">
        <title>The effects of different cysteine for glycine substitutions within alpha 2(I) chains. Evidence of distinct structural domains within the type I collagen triple helix.</title>
        <authorList>
            <person name="Wenstrup R.J."/>
            <person name="Shrago-Howe A.W."/>
            <person name="Lever L.W."/>
            <person name="Phillips C.L."/>
            <person name="Byers P.H."/>
            <person name="Cohn D.H."/>
        </authorList>
    </citation>
    <scope>VARIANT OI3 CYS-349</scope>
    <scope>VARIANT OI1 CYS-736</scope>
</reference>
<reference key="39">
    <citation type="journal article" date="1991" name="J. Biol. Chem.">
        <title>Substitutions for glycine alpha 1-637 and glycine alpha 2-694 of type I procollagen in lethal osteogenesis imperfecta. The conformational strain on the triple helix introduced by a glycine substitution can be transmitted along the helix.</title>
        <authorList>
            <person name="Tsuneyoshi T."/>
            <person name="Westerhausen A."/>
            <person name="Constantinou C.D."/>
            <person name="Prockop D.J."/>
        </authorList>
    </citation>
    <scope>VARIANT OI2 ARG-784</scope>
</reference>
<reference key="40">
    <citation type="journal article" date="1991" name="Proc. Natl. Acad. Sci. U.S.A.">
        <title>Mutation in a gene for type I procollagen (COL1A2) in a woman with postmenopausal osteoporosis: evidence for phenotypic and genotypic overlap with mild osteogenesis imperfecta.</title>
        <authorList>
            <person name="Spotila L.D."/>
            <person name="Constantinou C.D."/>
            <person name="Sereda L."/>
            <person name="Ganguly A."/>
            <person name="Riggs B.L."/>
            <person name="Prockop D.J."/>
        </authorList>
    </citation>
    <scope>VARIANT OI4 SER-751</scope>
</reference>
<reference key="41">
    <citation type="journal article" date="1992" name="Hum. Mutat.">
        <title>Recurrence of lethal osteogenesis imperfecta due to parental mosaicism for a mutation in the COL1A2 gene of type I collagen. The mosaic parent exhibits phenotypic features of a mild form of the disease.</title>
        <authorList>
            <person name="Edwards M.J."/>
            <person name="Wenstrup R.J."/>
            <person name="Byers P.H."/>
            <person name="Cohn D.H."/>
        </authorList>
    </citation>
    <scope>VARIANT OI2 CYS-562</scope>
</reference>
<reference key="42">
    <citation type="journal article" date="1992" name="Hum. Mutat.">
        <title>Lethal perinatal osteogenesis imperfecta due to a type I collagen alpha 2(I) Gly to Arg substitution detected by chemical cleavage of an mRNA:cDNA sequence mismatch.</title>
        <authorList>
            <person name="Bateman J.F."/>
            <person name="Moeller I."/>
            <person name="Hannagan M."/>
            <person name="Chan D."/>
            <person name="Cole W.G."/>
        </authorList>
    </citation>
    <scope>VARIANT OI2 ARG-547</scope>
</reference>
<reference key="43">
    <citation type="journal article" date="1992" name="J. Biol. Chem.">
        <title>Incorporation of type I collagen molecules that contain a mutant alpha 2(I) chain (Gly580--&gt;Asp) into bone matrix in a lethal case of osteogenesis imperfecta.</title>
        <authorList>
            <person name="Niyibizi C."/>
            <person name="Bonadio J."/>
            <person name="Byers P.H."/>
            <person name="Eyre D.R."/>
        </authorList>
    </citation>
    <scope>VARIANT OI2 ASP-670</scope>
</reference>
<reference key="44">
    <citation type="journal article" date="1993" name="Am. J. Med. Genet.">
        <title>Mutations in the COL1A2 gene of type I collagen that result in nonlethal forms of osteogenesis imperfecta.</title>
        <authorList>
            <person name="Wenstrup R.J."/>
            <person name="Lever L.W."/>
            <person name="Phillips C.L."/>
            <person name="Quarles L.D."/>
        </authorList>
    </citation>
    <scope>VARIANT OI3 CYS-349</scope>
    <scope>VARIANT OI1 CYS-736</scope>
</reference>
<reference key="45">
    <citation type="journal article" date="1993" name="Am. J. Med. Genet.">
        <title>Chemical cleavage method for the detection of RNA base changes: experience in the application to collagen mutations in osteogenesis imperfecta.</title>
        <authorList>
            <person name="Bateman J.F."/>
            <person name="Lamande S.R."/>
            <person name="Hannagan M."/>
            <person name="Moeller I."/>
            <person name="Dahl H.-H.M."/>
            <person name="Cole W.G."/>
        </authorList>
    </citation>
    <scope>VARIANT ALA-549</scope>
</reference>
<reference key="46">
    <citation type="journal article" date="1993" name="Hum. Genet.">
        <title>A single amino acid deletion in the alpha 2(I) chain of type I collagen produces osteogenesis imperfecta type III.</title>
        <authorList>
            <person name="Molyneux K."/>
            <person name="Starman B.J."/>
            <person name="Byers P.H."/>
            <person name="Dalgleish R."/>
        </authorList>
    </citation>
    <scope>VARIANT OI3 VAL-345 DEL</scope>
</reference>
<reference key="47">
    <citation type="journal article" date="1993" name="Hum. Mol. Genet.">
        <title>Identification of type I collagen gene (COL1A2) mutations in nonlethal osteogenesis imperfecta.</title>
        <authorList>
            <person name="Sztrolovics R."/>
            <person name="Glorieux F.H."/>
            <person name="van der Rest M."/>
            <person name="Roughley P.J."/>
        </authorList>
    </citation>
    <scope>VARIANT OI4 VAL-634</scope>
</reference>
<reference key="48">
    <citation type="journal article" date="1993" name="Hum. Mol. Genet.">
        <title>A novel glycine to glutamic acid substitution at position 343 in the alpha 2 chain of type I collagen in an individual with lethal osteogenesis imperfecta.</title>
        <authorList>
            <person name="Rose N.J."/>
            <person name="Mackay K."/>
            <person name="Byers P.H."/>
            <person name="Dalgleish R."/>
        </authorList>
    </citation>
    <scope>VARIANT OI2 GLU-433</scope>
</reference>
<reference key="49">
    <citation type="journal article" date="1993" name="J. Biol. Chem.">
        <title>Serine for glycine substitutions in type I collagen in two cases of type IV osteogenesis imperfecta (OI). Additional evidence for a regional model of OI pathophysiology.</title>
        <authorList>
            <person name="Marini J.C."/>
            <person name="Lewis M.B."/>
            <person name="Wang Q."/>
            <person name="Chen K.J."/>
            <person name="Orrison B.M."/>
        </authorList>
    </citation>
    <scope>VARIANT OI4 SER-1012</scope>
</reference>
<reference key="50">
    <citation type="journal article" date="1993" name="J. Biol. Chem.">
        <title>Two additional cases of osteogenesis imperfecta with substitutions for glycine in the alpha 2(I) collagen chain. A regional model relating mutation location with phenotype.</title>
        <authorList>
            <person name="Wang Q."/>
            <person name="Orrison B.M."/>
            <person name="Marini J.C."/>
        </authorList>
    </citation>
    <scope>VARIANT OI4 VAL-766</scope>
    <scope>VARIANT OI2 SER-796</scope>
</reference>
<reference key="51">
    <citation type="journal article" date="1994" name="Bone">
        <title>Osteogenesis imperfecta: comparison of molecular defects with bone histological changes.</title>
        <authorList>
            <person name="Sztrolovics R."/>
            <person name="Glorieux F.H."/>
            <person name="Travers R."/>
            <person name="van der Rest M."/>
            <person name="Roughley P.J."/>
        </authorList>
    </citation>
    <scope>VARIANT OI3 ARG-517</scope>
</reference>
<reference key="52">
    <citation type="journal article" date="1994" name="Hum. Genet.">
        <title>Three unrelated individuals with perinatally lethal osteogenesis imperfecta resulting from identical Gly502Ser substitutions in the alpha 2-chain of type I collagen.</title>
        <authorList>
            <person name="Rose N.J."/>
            <person name="Mackay K."/>
            <person name="de Paepe A."/>
            <person name="Steinmann B."/>
            <person name="Punnett H.H."/>
            <person name="Dalgleish R."/>
        </authorList>
    </citation>
    <scope>VARIANT OI2 SER-592</scope>
</reference>
<reference key="53">
    <citation type="journal article" date="1994" name="Hum. Mutat.">
        <title>A Gly859Ser substitution in the triple helical domain of the alpha 2 chain of type I collagen resulting in osteogenesis imperfecta type III in two unrelated individuals.</title>
        <authorList>
            <person name="Rose N.J."/>
            <person name="Mackay K."/>
            <person name="Byers P.H."/>
            <person name="Dalgleish R."/>
        </authorList>
    </citation>
    <scope>VARIANT OI3 SER-949</scope>
</reference>
<reference key="54">
    <citation type="journal article" date="1994" name="J. Biol. Chem.">
        <title>Substitution of an aspartic acid for glycine 700 in the alpha 2(I) chain of type I collagen in a recurrent lethal type II osteogenesis imperfecta dramatically affects the mineralization of bone.</title>
        <authorList>
            <person name="Cohen-Solal L."/>
            <person name="Zylberberg L."/>
            <person name="Sangalli A."/>
            <person name="Gomez Lira M."/>
            <person name="Mottes M."/>
        </authorList>
    </citation>
    <scope>VARIANT OI2 ASP-790</scope>
</reference>
<reference key="55">
    <citation type="journal article" date="1994" name="J. Med. Genet.">
        <title>Determination of a new collagen type I alpha 2 gene point mutation which causes a Gly640 Cys substitution in osteogenesis imperfecta and prenatal diagnosis by DNA hybridisation.</title>
        <authorList>
            <person name="Gomez Lira M."/>
            <person name="Sangalli A."/>
            <person name="Pignatti P.F."/>
            <person name="Digilio M.C."/>
            <person name="Giannotti A."/>
            <person name="Carnevale E."/>
            <person name="Mottes M."/>
        </authorList>
    </citation>
    <scope>VARIANT OI2 CYS-730</scope>
</reference>
<reference key="56">
    <citation type="journal article" date="1995" name="Eur. J. Pediatr.">
        <title>Genetic counselling on brittle grounds: recurring osteogenesis imperfecta due to parental mosaicism for a dominant mutation.</title>
        <authorList>
            <person name="Raghunath M."/>
            <person name="Mackay K."/>
            <person name="Dalgleish R."/>
            <person name="Steinmann B."/>
        </authorList>
    </citation>
    <scope>VARIANT OI3 SER-778</scope>
</reference>
<reference key="57">
    <citation type="journal article" date="1995" name="Hum. Genet.">
        <title>A Gly238Ser substitution in the alpha 2 chain of type I collagen results in osteogenesis imperfecta type III.</title>
        <authorList>
            <person name="Rose N.J."/>
            <person name="Mackay K."/>
            <person name="Byers P.H."/>
            <person name="Dalgleish R."/>
        </authorList>
    </citation>
    <scope>VARIANT OI3 SER-328</scope>
</reference>
<reference key="58">
    <citation type="journal article" date="1995" name="Hum. Mutat.">
        <title>A novel G1006A substitution in the alpha 2(I) chain of type I collagen produces osteogenesis imperfecta type III.</title>
        <authorList>
            <person name="Lu J."/>
            <person name="Costa T."/>
            <person name="Cole W.G."/>
        </authorList>
    </citation>
    <scope>VARIANT OI3 ALA-1096</scope>
</reference>
<reference key="59">
    <citation type="journal article" date="1996" name="Eur. J. Hum. Genet.">
        <title>Gly802Asp substitution in the pro alpha 2(I) collagen chain in a family with recurrent osteogenesis imperfecta due to paternal mosaicism.</title>
        <authorList>
            <person name="Lund A.M."/>
            <person name="Schwartz M."/>
            <person name="Raghunath M."/>
            <person name="Steinmann B."/>
            <person name="Skovby F."/>
        </authorList>
    </citation>
    <scope>VARIANT OI3 ASP-892</scope>
    <scope>VARIANT OI4 ASP-892</scope>
</reference>
<reference key="60">
    <citation type="journal article" date="1996" name="Hum. Mutat.">
        <title>Direct sequencing of PCR products derived from cDNAs for the pro alpha 1 and pro alpha 2 chains of type I procollagen as a screening method to detect mutations in patients with osteogenesis imperfecta.</title>
        <authorList>
            <person name="Zhuang J."/>
            <person name="Tromp G."/>
            <person name="Kuivaniemi H."/>
            <person name="Castells S."/>
            <person name="Bugge M."/>
            <person name="Prockop D.J."/>
        </authorList>
    </citation>
    <scope>VARIANTS OI1 ASP-211 AND SER-835</scope>
    <scope>VARIANTS OI3 SER-337 AND SER-460</scope>
    <scope>VARIANT HIS-822</scope>
</reference>
<reference key="61">
    <citation type="journal article" date="1996" name="Hum. Mutat.">
        <title>Mutation in the carboxy-terminal propeptide of the Pro alpha 1(I) chain of type I collagen in a child with severe osteogenesis imperfecta (OI type III): possible implications for protein folding.</title>
        <authorList>
            <person name="Oliver J.E."/>
            <person name="Thompson E.M."/>
            <person name="Pope F.M."/>
            <person name="Nicholls A.C."/>
        </authorList>
    </citation>
    <scope>VARIANT OI3 PRO-1148</scope>
</reference>
<reference key="62">
    <citation type="journal article" date="1998" name="Hum. Mutat.">
        <title>Four new cases of lethal osteogenesis imperfecta due to glycine substitutions in COL1A1 and genes.</title>
        <authorList>
            <person name="Mottes M."/>
            <person name="Gomez Lira M."/>
            <person name="Zolezzi F."/>
            <person name="Valli M."/>
            <person name="Lisi V."/>
            <person name="Freising P."/>
        </authorList>
    </citation>
    <scope>VARIANTS OI2 VAL-409 AND CYS-787</scope>
</reference>
<reference key="63">
    <citation type="journal article" date="1998" name="Matrix Biol.">
        <title>An alpha2(I) glycine to aspartate substitution is responsible for the presence of a kink in type I collagen in a lethal case of osteogenesis imperfecta.</title>
        <authorList>
            <person name="Forlino A."/>
            <person name="Keene D.R."/>
            <person name="Schmidt K."/>
            <person name="Marini J.C."/>
        </authorList>
    </citation>
    <scope>VARIANT OI2 ASP-511</scope>
</reference>
<reference key="64">
    <citation type="journal article" date="1999" name="Hum. Mutat.">
        <title>Osteogenesis imperfecta: mosaicism and refinement of the genotype-phenotype map in OI type III.</title>
        <authorList>
            <person name="Lund A.M."/>
            <person name="Astroem E."/>
            <person name="Soederhaell S."/>
            <person name="Schwartz M."/>
            <person name="Skovby F."/>
        </authorList>
    </citation>
    <scope>VARIANTS OI3 ASP-331; CYS-337 AND VAL-973</scope>
</reference>
<reference key="65">
    <citation type="journal article" date="2000" name="Cancer Res.">
        <title>PLAG1 fusion oncogenes in lipoblastoma.</title>
        <authorList>
            <person name="Hibbard M.K."/>
            <person name="Kozakewich H.P."/>
            <person name="Dal Cin P."/>
            <person name="Sciot R."/>
            <person name="Tan X."/>
            <person name="Xiao S."/>
            <person name="Fletcher J.A."/>
        </authorList>
    </citation>
    <scope>CHROMOSOMAL REARRANGEMENT WITH PLAG1</scope>
</reference>
<reference key="66">
    <citation type="journal article" date="2004" name="Am. J. Hum. Genet.">
        <title>Rare autosomal recessive cardiac valvular form of Ehlers-Danlos syndrome results from mutations in the COL1A2 gene that activate the nonsense-mediated RNA decay pathway.</title>
        <authorList>
            <person name="Schwarze U."/>
            <person name="Hata R."/>
            <person name="McKusick V.A."/>
            <person name="Shinkai H."/>
            <person name="Hoyme H.E."/>
            <person name="Pyeritz R.E."/>
            <person name="Byers P.H."/>
        </authorList>
    </citation>
    <scope>INVOLVEMENT IN CARDIAC VALVULAR EDS</scope>
</reference>
<reference key="67">
    <citation type="journal article" date="2006" name="J. Med. Genet.">
        <title>Total absence of the alpha2(I) chain of collagen type I causes a rare form of Ehlers-Danlos syndrome with hypermobility and propensity to cardiac valvular problems.</title>
        <authorList>
            <person name="Malfait F."/>
            <person name="Symoens S."/>
            <person name="Coucke P."/>
            <person name="Nunes L."/>
            <person name="De Almeida S."/>
            <person name="De Paepe A."/>
        </authorList>
    </citation>
    <scope>INVOLVEMENT IN EDSCV</scope>
</reference>
<reference key="68">
    <citation type="journal article" date="2006" name="Clin. Genet.">
        <title>Osteogenesis imperfecta: clinical, biochemical and molecular findings.</title>
        <authorList>
            <person name="Venturi G."/>
            <person name="Tedeschi E."/>
            <person name="Mottes M."/>
            <person name="Valli M."/>
            <person name="Camilot M."/>
            <person name="Viglio S."/>
            <person name="Antoniazzi F."/>
            <person name="Tato L."/>
        </authorList>
    </citation>
    <scope>VARIANTS OI4 SER-193 AND CYS-754</scope>
    <scope>VARIANT OI2 ASP-625</scope>
    <scope>VARIANTS OI3 CYS-835 AND VAL-991</scope>
</reference>
<reference key="69">
    <citation type="journal article" date="2006" name="Hum. Mutat.">
        <title>Mutational spectrum of type I collagen genes in Korean patients with osteogenesis imperfecta.</title>
        <authorList>
            <person name="Lee K.S."/>
            <person name="Song H.R."/>
            <person name="Cho T.J."/>
            <person name="Kim H.J."/>
            <person name="Lee T.M."/>
            <person name="Jin H.S."/>
            <person name="Park H.Y."/>
            <person name="Kang S."/>
            <person name="Jung S.C."/>
            <person name="Koo S.K."/>
        </authorList>
    </citation>
    <scope>VARIANTS OI1/OI3/OI4 GLU-325; SER-328; SER-358; SER-601; ASP-676; SER-820; ARG-856; SER-1012; PRO-PRO-GLY-811 INS; VAL-GLY-PRO-989 INS AND 1094-PRO--GLY-1096 DEL</scope>
</reference>
<reference key="70">
    <citation type="journal article" date="2006" name="Hum. Mutat.">
        <title>Mutation analysis of COL1A1 and COL1A2 in patients diagnosed with osteogenesis imperfecta type I-IV.</title>
        <authorList>
            <person name="Pollitt R."/>
            <person name="McMahon R."/>
            <person name="Nunn J."/>
            <person name="Bamford R."/>
            <person name="Afifi A."/>
            <person name="Bishop N."/>
            <person name="Dalton A."/>
        </authorList>
    </citation>
    <scope>VARIANTS OI4 ARG-202 AND VAL-256</scope>
    <scope>VARIANTS OI1 ARG-247; ARG-319; CYS-733 AND TYR-1195</scope>
    <scope>VARIANTS OI2 ASP-253; ASP-982 AND ASP-1003</scope>
    <scope>VARIANT OI3 ASP-1087</scope>
</reference>
<reference key="71">
    <citation type="journal article" date="2007" name="Hum. Mutat.">
        <title>Consortium for osteogenesis imperfecta mutations in the helical domain of type I collagen: regions rich in lethal mutations align with collagen binding sites for integrins and proteoglycans.</title>
        <authorList>
            <person name="Marini J.C."/>
            <person name="Forlino A."/>
            <person name="Cabral W.A."/>
            <person name="Barnes A.M."/>
            <person name="San Antonio J.D."/>
            <person name="Milgrom S."/>
            <person name="Hyland J.C."/>
            <person name="Koerkkoe J."/>
            <person name="Prockop D.J."/>
            <person name="De Paepe A."/>
            <person name="Coucke P."/>
            <person name="Symoens S."/>
            <person name="Glorieux F.H."/>
            <person name="Roughley P.J."/>
            <person name="Lund A.M."/>
            <person name="Kuurila-Svahn K."/>
            <person name="Hartikka H."/>
            <person name="Cohn D.H."/>
            <person name="Krakow D."/>
            <person name="Mottes M."/>
            <person name="Schwarze U."/>
            <person name="Chen D."/>
            <person name="Yang K."/>
            <person name="Kuslich C."/>
            <person name="Troendle J."/>
            <person name="Dalgleish R."/>
            <person name="Byers P.H."/>
        </authorList>
    </citation>
    <scope>VARIANTS OI2 ARG-586; ASP-637 AND ASP-1066</scope>
</reference>
<reference key="72">
    <citation type="journal article" date="2008" name="Genomics">
        <title>Natural variation in four human collagen genes across an ethnically diverse population.</title>
        <authorList>
            <person name="Chan T.F."/>
            <person name="Poon A."/>
            <person name="Basu A."/>
            <person name="Addleman N.R."/>
            <person name="Chen J."/>
            <person name="Phong A."/>
            <person name="Byers P.H."/>
            <person name="Klein T.E."/>
            <person name="Kwok P.Y."/>
        </authorList>
    </citation>
    <scope>VARIANTS SER-528; ALA-549 AND THR-564</scope>
</reference>
<reference key="73">
    <citation type="journal article" date="2009" name="Hum. Mol. Genet.">
        <title>Mutation and polymorphism spectrum in osteogenesis imperfecta type II: implications for genotype-phenotype relationships.</title>
        <authorList>
            <person name="Bodian D.L."/>
            <person name="Chan T.F."/>
            <person name="Poon A."/>
            <person name="Schwarze U."/>
            <person name="Yang K."/>
            <person name="Byers P.H."/>
            <person name="Kwok P.Y."/>
            <person name="Klein T.E."/>
        </authorList>
    </citation>
    <scope>VARIANTS OI2 CYS-234; ARG-283; GLU-397; CYS-454; LEU-457; 461-PRO--GLY-466 DEL; GLU-526; VAL-562; 705-ALA--PRO-707 DEL; ARG-739; VAL-748; ASP-790; PRO-798 INS; 806-PRO--GLY-811 DEL; VAL-856; SER-949; ASP-955; GLU-1027 AND 1058-PRO--ALA-1062 DEL</scope>
    <scope>VARIANT ALA-549</scope>
</reference>
<reference key="74">
    <citation type="journal article" date="2011" name="Genet. Med.">
        <title>Recurrence of perinatal lethal osteogenesis imperfecta in sibships: parsing the risk between parental mosaicism for dominant mutations and autosomal recessive inheritance.</title>
        <authorList>
            <person name="Pyott S.M."/>
            <person name="Pepin M.G."/>
            <person name="Schwarze U."/>
            <person name="Yang K."/>
            <person name="Smith G."/>
            <person name="Byers P.H."/>
        </authorList>
    </citation>
    <scope>VARIANTS OI2 VAL-345 DEL; CYS-454; CYS-562; ASP-715 AND ASP-1087</scope>
</reference>
<reference key="75">
    <citation type="journal article" date="2011" name="Hum. Mutat.">
        <title>COL1 C-propeptide cleavage site mutations cause high bone mass osteogenesis imperfecta.</title>
        <authorList>
            <person name="Lindahl K."/>
            <person name="Barnes A.M."/>
            <person name="Fratzl-Zelman N."/>
            <person name="Whyte M.P."/>
            <person name="Hefferan T.E."/>
            <person name="Makareeva E."/>
            <person name="Brusel M."/>
            <person name="Yaszemski M.J."/>
            <person name="Rubin C.J."/>
            <person name="Kindmark A."/>
            <person name="Roschger P."/>
            <person name="Klaushofer K."/>
            <person name="McAlister W.H."/>
            <person name="Mumm S."/>
            <person name="Leikin S."/>
            <person name="Kessler E."/>
            <person name="Boskey A.L."/>
            <person name="Ljunggren O."/>
            <person name="Marini J.C."/>
        </authorList>
    </citation>
    <scope>VARIANT THR-1119</scope>
    <scope>CHARACTERIZATION OF VARIANT THR-1119</scope>
</reference>
<reference key="76">
    <citation type="journal article" date="2013" name="N. Engl. J. Med.">
        <title>WNT1 mutations in early-onset osteoporosis and osteogenesis imperfecta.</title>
        <authorList>
            <person name="Laine C.M."/>
            <person name="Joeng K.S."/>
            <person name="Campeau P.M."/>
            <person name="Kiviranta R."/>
            <person name="Tarkkonen K."/>
            <person name="Grover M."/>
            <person name="Lu J.T."/>
            <person name="Pekkinen M."/>
            <person name="Wessman M."/>
            <person name="Heino T.J."/>
            <person name="Nieminen-Pihala V."/>
            <person name="Aronen M."/>
            <person name="Laine T."/>
            <person name="Kroeger H."/>
            <person name="Cole W.G."/>
            <person name="Lehesjoki A.E."/>
            <person name="Nevarez L."/>
            <person name="Krakow D."/>
            <person name="Curry C.J."/>
            <person name="Cohn D.H."/>
            <person name="Gibbs R.A."/>
            <person name="Lee B.H."/>
            <person name="Maekitie O."/>
        </authorList>
    </citation>
    <scope>VARIANT HIS-1067</scope>
</reference>
<reference key="77">
    <citation type="journal article" date="2013" name="Orphanet J. Rare Dis.">
        <title>Helical mutations in type I collagen that affect the processing of the amino-propeptide result in an Osteogenesis Imperfecta/Ehlers-Danlos Syndrome overlap syndrome.</title>
        <authorList>
            <person name="Malfait F."/>
            <person name="Symoens S."/>
            <person name="Goemans N."/>
            <person name="Gyftodimou Y."/>
            <person name="Holmberg E."/>
            <person name="Lopez-Gonzalez V."/>
            <person name="Mortier G."/>
            <person name="Nampoothiri S."/>
            <person name="Petersen M.B."/>
            <person name="De Paepe A."/>
        </authorList>
    </citation>
    <scope>VARIANTS OIEDS2 ASP-109 AND VAL-196</scope>
    <scope>CHARACTERIZATION OF VARIANT OIEDS2 ASP-109</scope>
    <scope>INVOLVEMENT IN OIEDS2</scope>
</reference>
<reference key="78">
    <citation type="journal article" date="2016" name="Osteoporos. Int.">
        <title>DNA sequence analysis in 598 individuals with a clinical diagnosis of osteogenesis imperfecta: diagnostic yield and mutation spectrum.</title>
        <authorList>
            <person name="Bardai G."/>
            <person name="Moffatt P."/>
            <person name="Glorieux F.H."/>
            <person name="Rauch F."/>
        </authorList>
    </citation>
    <scope>VARIANT OI3 ARG-754</scope>
</reference>
<gene>
    <name type="primary">COL1A2</name>
</gene>
<keyword id="KW-0002">3D-structure</keyword>
<keyword id="KW-0106">Calcium</keyword>
<keyword id="KW-0160">Chromosomal rearrangement</keyword>
<keyword id="KW-0176">Collagen</keyword>
<keyword id="KW-0903">Direct protein sequencing</keyword>
<keyword id="KW-0225">Disease variant</keyword>
<keyword id="KW-1015">Disulfide bond</keyword>
<keyword id="KW-0242">Dwarfism</keyword>
<keyword id="KW-0248">Ehlers-Danlos syndrome</keyword>
<keyword id="KW-0272">Extracellular matrix</keyword>
<keyword id="KW-0325">Glycoprotein</keyword>
<keyword id="KW-0379">Hydroxylation</keyword>
<keyword id="KW-0479">Metal-binding</keyword>
<keyword id="KW-1065">Osteogenesis imperfecta</keyword>
<keyword id="KW-1267">Proteomics identification</keyword>
<keyword id="KW-0873">Pyrrolidone carboxylic acid</keyword>
<keyword id="KW-1185">Reference proteome</keyword>
<keyword id="KW-0677">Repeat</keyword>
<keyword id="KW-0964">Secreted</keyword>
<keyword id="KW-0732">Signal</keyword>
<feature type="signal peptide" evidence="2">
    <location>
        <begin position="1"/>
        <end position="22"/>
    </location>
</feature>
<feature type="propeptide" id="PRO_0000005804" description="N-terminal propeptide" evidence="46">
    <location>
        <begin position="23"/>
        <end position="79"/>
    </location>
</feature>
<feature type="chain" id="PRO_0000005805" description="Collagen alpha-2(I) chain">
    <location>
        <begin position="80"/>
        <end position="1119"/>
    </location>
</feature>
<feature type="propeptide" id="PRO_0000005806" description="C-terminal propeptide">
    <location>
        <begin position="1120"/>
        <end position="1366"/>
    </location>
</feature>
<feature type="domain" description="Fibrillar collagen NC1" evidence="5">
    <location>
        <begin position="1133"/>
        <end position="1366"/>
    </location>
</feature>
<feature type="region of interest" description="Disordered" evidence="6">
    <location>
        <begin position="28"/>
        <end position="1130"/>
    </location>
</feature>
<feature type="compositionally biased region" description="Basic and acidic residues" evidence="6">
    <location>
        <begin position="28"/>
        <end position="44"/>
    </location>
</feature>
<feature type="compositionally biased region" description="Pro residues" evidence="6">
    <location>
        <begin position="59"/>
        <end position="71"/>
    </location>
</feature>
<feature type="compositionally biased region" description="Gly residues" evidence="6">
    <location>
        <begin position="84"/>
        <end position="94"/>
    </location>
</feature>
<feature type="compositionally biased region" description="Low complexity" evidence="6">
    <location>
        <begin position="95"/>
        <end position="140"/>
    </location>
</feature>
<feature type="compositionally biased region" description="Basic and acidic residues" evidence="6">
    <location>
        <begin position="141"/>
        <end position="155"/>
    </location>
</feature>
<feature type="compositionally biased region" description="Low complexity" evidence="6">
    <location>
        <begin position="225"/>
        <end position="254"/>
    </location>
</feature>
<feature type="compositionally biased region" description="Low complexity" evidence="6">
    <location>
        <begin position="269"/>
        <end position="293"/>
    </location>
</feature>
<feature type="compositionally biased region" description="Low complexity" evidence="6">
    <location>
        <begin position="300"/>
        <end position="321"/>
    </location>
</feature>
<feature type="compositionally biased region" description="Low complexity" evidence="6">
    <location>
        <begin position="330"/>
        <end position="345"/>
    </location>
</feature>
<feature type="compositionally biased region" description="Low complexity" evidence="6">
    <location>
        <begin position="398"/>
        <end position="410"/>
    </location>
</feature>
<feature type="compositionally biased region" description="Low complexity" evidence="6">
    <location>
        <begin position="419"/>
        <end position="434"/>
    </location>
</feature>
<feature type="compositionally biased region" description="Low complexity" evidence="6">
    <location>
        <begin position="470"/>
        <end position="489"/>
    </location>
</feature>
<feature type="compositionally biased region" description="Low complexity" evidence="6">
    <location>
        <begin position="513"/>
        <end position="531"/>
    </location>
</feature>
<feature type="compositionally biased region" description="Gly residues" evidence="6">
    <location>
        <begin position="538"/>
        <end position="547"/>
    </location>
</feature>
<feature type="compositionally biased region" description="Low complexity" evidence="6">
    <location>
        <begin position="594"/>
        <end position="611"/>
    </location>
</feature>
<feature type="compositionally biased region" description="Low complexity" evidence="6">
    <location>
        <begin position="623"/>
        <end position="648"/>
    </location>
</feature>
<feature type="compositionally biased region" description="Low complexity" evidence="6">
    <location>
        <begin position="663"/>
        <end position="710"/>
    </location>
</feature>
<feature type="compositionally biased region" description="Low complexity" evidence="6">
    <location>
        <begin position="717"/>
        <end position="737"/>
    </location>
</feature>
<feature type="compositionally biased region" description="Basic and acidic residues" evidence="6">
    <location>
        <begin position="738"/>
        <end position="747"/>
    </location>
</feature>
<feature type="compositionally biased region" description="Low complexity" evidence="6">
    <location>
        <begin position="752"/>
        <end position="765"/>
    </location>
</feature>
<feature type="compositionally biased region" description="Gly residues" evidence="6">
    <location>
        <begin position="775"/>
        <end position="784"/>
    </location>
</feature>
<feature type="compositionally biased region" description="Low complexity" evidence="6">
    <location>
        <begin position="786"/>
        <end position="795"/>
    </location>
</feature>
<feature type="compositionally biased region" description="Low complexity" evidence="6">
    <location>
        <begin position="849"/>
        <end position="876"/>
    </location>
</feature>
<feature type="compositionally biased region" description="Low complexity" evidence="6">
    <location>
        <begin position="884"/>
        <end position="932"/>
    </location>
</feature>
<feature type="compositionally biased region" description="Low complexity" evidence="6">
    <location>
        <begin position="956"/>
        <end position="974"/>
    </location>
</feature>
<feature type="compositionally biased region" description="Low complexity" evidence="6">
    <location>
        <begin position="983"/>
        <end position="1001"/>
    </location>
</feature>
<feature type="compositionally biased region" description="Basic and acidic residues" evidence="6">
    <location>
        <begin position="1005"/>
        <end position="1016"/>
    </location>
</feature>
<feature type="compositionally biased region" description="Pro residues" evidence="6">
    <location>
        <begin position="1089"/>
        <end position="1101"/>
    </location>
</feature>
<feature type="binding site" evidence="3">
    <location>
        <position position="1181"/>
    </location>
    <ligand>
        <name>Ca(2+)</name>
        <dbReference type="ChEBI" id="CHEBI:29108"/>
    </ligand>
</feature>
<feature type="binding site" evidence="3">
    <location>
        <position position="1183"/>
    </location>
    <ligand>
        <name>Ca(2+)</name>
        <dbReference type="ChEBI" id="CHEBI:29108"/>
    </ligand>
</feature>
<feature type="binding site" evidence="3">
    <location>
        <position position="1184"/>
    </location>
    <ligand>
        <name>Ca(2+)</name>
        <dbReference type="ChEBI" id="CHEBI:29108"/>
    </ligand>
</feature>
<feature type="binding site" evidence="3">
    <location>
        <position position="1186"/>
    </location>
    <ligand>
        <name>Ca(2+)</name>
        <dbReference type="ChEBI" id="CHEBI:29108"/>
    </ligand>
</feature>
<feature type="binding site" evidence="3">
    <location>
        <position position="1189"/>
    </location>
    <ligand>
        <name>Ca(2+)</name>
        <dbReference type="ChEBI" id="CHEBI:29108"/>
    </ligand>
</feature>
<feature type="modified residue" description="Pyrrolidone carboxylic acid" evidence="33">
    <location>
        <position position="23"/>
    </location>
</feature>
<feature type="modified residue" description="4-hydroxyproline" evidence="33 42">
    <location>
        <position position="47"/>
    </location>
</feature>
<feature type="modified residue" description="4-hydroxyproline" evidence="33 42">
    <location>
        <position position="50"/>
    </location>
</feature>
<feature type="modified residue" description="4-hydroxyproline" evidence="33 42">
    <location>
        <position position="62"/>
    </location>
</feature>
<feature type="modified residue" description="4-hydroxyproline" evidence="33 42">
    <location>
        <position position="65"/>
    </location>
</feature>
<feature type="modified residue" description="4-hydroxyproline" evidence="33 42">
    <location>
        <position position="68"/>
    </location>
</feature>
<feature type="modified residue" description="4-hydroxyproline" evidence="33 42">
    <location>
        <position position="71"/>
    </location>
</feature>
<feature type="modified residue" description="Pyrrolidone carboxylic acid" evidence="46">
    <location>
        <position position="80"/>
    </location>
</feature>
<feature type="modified residue" description="Allysine" evidence="46">
    <location>
        <position position="84"/>
    </location>
</feature>
<feature type="modified residue" description="4-hydroxyproline" evidence="42">
    <location>
        <position position="102"/>
    </location>
</feature>
<feature type="modified residue" description="4-hydroxyproline" evidence="42">
    <location>
        <position position="108"/>
    </location>
</feature>
<feature type="modified residue" description="5-hydroxylysine; alternate" evidence="44">
    <location>
        <position position="177"/>
    </location>
</feature>
<feature type="modified residue" description="4-hydroxyproline" evidence="45">
    <location>
        <position position="420"/>
    </location>
</feature>
<feature type="modified residue" description="4-hydroxyproline" evidence="45">
    <location>
        <position position="441"/>
    </location>
</feature>
<feature type="modified residue" description="4-hydroxyproline" evidence="45">
    <location>
        <position position="444"/>
    </location>
</feature>
<feature type="glycosylation site" description="O-linked (Gal...) hydroxylysine; alternate" evidence="44">
    <location>
        <position position="177"/>
    </location>
</feature>
<feature type="glycosylation site" description="N-linked (GlcNAc...) asparagine" evidence="4">
    <location>
        <position position="1267"/>
    </location>
</feature>
<feature type="disulfide bond" evidence="5">
    <location>
        <begin position="1163"/>
        <end position="1195"/>
    </location>
</feature>
<feature type="disulfide bond" evidence="5">
    <location>
        <begin position="1203"/>
        <end position="1364"/>
    </location>
</feature>
<feature type="disulfide bond" evidence="5">
    <location>
        <begin position="1272"/>
        <end position="1317"/>
    </location>
</feature>
<feature type="sequence variant" id="VAR_030116" description="In dbSNP:rs1800221." evidence="43">
    <original>T</original>
    <variation>P</variation>
    <location>
        <position position="59"/>
    </location>
</feature>
<feature type="sequence variant" id="VAR_001851" description="In EDSARTH2." evidence="14 33 42">
    <location>
        <begin position="76"/>
        <end position="93"/>
    </location>
</feature>
<feature type="sequence variant" id="VAR_085153" description="In OIEDS2; decreased N-terminal propeptide processing; dbSNP:rs1114167416." evidence="32">
    <original>G</original>
    <variation>D</variation>
    <location>
        <position position="109"/>
    </location>
</feature>
<feature type="sequence variant" id="VAR_030117" description="In OI4." evidence="15">
    <location>
        <begin position="181"/>
        <end position="198"/>
    </location>
</feature>
<feature type="sequence variant" id="VAR_063343" description="In OI4; dbSNP:rs72656370." evidence="19">
    <original>G</original>
    <variation>S</variation>
    <location>
        <position position="193"/>
    </location>
</feature>
<feature type="sequence variant" id="VAR_085154" description="In OIEDS2." evidence="32">
    <original>G</original>
    <variation>V</variation>
    <location>
        <position position="196"/>
    </location>
</feature>
<feature type="sequence variant" id="VAR_063344" description="In OI4; dbSNP:rs72656376." evidence="17">
    <original>G</original>
    <variation>R</variation>
    <location>
        <position position="202"/>
    </location>
</feature>
<feature type="sequence variant" id="VAR_001852" description="In OI1; dbSNP:rs72656378." evidence="68">
    <original>G</original>
    <variation>D</variation>
    <location>
        <position position="211"/>
    </location>
</feature>
<feature type="sequence variant" id="VAR_063345" description="In OI2; dbSNP:rs1206388800." evidence="24">
    <original>R</original>
    <variation>C</variation>
    <location>
        <position position="234"/>
    </location>
</feature>
<feature type="sequence variant" id="VAR_063346" description="In OI1." evidence="17">
    <original>G</original>
    <variation>R</variation>
    <location>
        <position position="247"/>
    </location>
</feature>
<feature type="sequence variant" id="VAR_001853" description="In dbSNP:rs1800228." evidence="36">
    <original>I</original>
    <variation>N</variation>
    <location>
        <position position="249"/>
    </location>
</feature>
<feature type="sequence variant" id="VAR_063347" description="In OI2; dbSNP:rs72656385." evidence="17">
    <original>G</original>
    <variation>D</variation>
    <location>
        <position position="253"/>
    </location>
</feature>
<feature type="sequence variant" id="VAR_063348" description="In OI4; dbSNP:rs67525025." evidence="17">
    <original>G</original>
    <variation>V</variation>
    <location>
        <position position="256"/>
    </location>
</feature>
<feature type="sequence variant" id="VAR_030118" description="In dbSNP:rs368468." evidence="70">
    <original>V</original>
    <variation>I</variation>
    <location>
        <position position="270"/>
    </location>
</feature>
<feature type="sequence variant" id="VAR_001854" description="In dbSNP:rs1800231." evidence="36">
    <original>A</original>
    <variation>T</variation>
    <location>
        <position position="276"/>
    </location>
</feature>
<feature type="sequence variant" id="VAR_063349" description="In OI2." evidence="24">
    <original>G</original>
    <variation>R</variation>
    <location>
        <position position="283"/>
    </location>
</feature>
<feature type="sequence variant" id="VAR_063350" description="In OI1; dbSNP:rs72656393." evidence="17">
    <original>G</original>
    <variation>R</variation>
    <location>
        <position position="319"/>
    </location>
</feature>
<feature type="sequence variant" id="VAR_063351" description="In OI4; dbSNP:rs72656395." evidence="16">
    <original>G</original>
    <variation>E</variation>
    <location>
        <position position="325"/>
    </location>
</feature>
<feature type="sequence variant" id="VAR_001855" description="In OI1, OI3 and OI4; dbSNP:rs66612022." evidence="16 54">
    <original>G</original>
    <variation>S</variation>
    <location>
        <position position="328"/>
    </location>
</feature>
<feature type="sequence variant" id="VAR_008119" description="In OI3; dbSNP:rs67729041." evidence="7">
    <original>G</original>
    <variation>D</variation>
    <location>
        <position position="331"/>
    </location>
</feature>
<feature type="sequence variant" id="VAR_001857" description="In OI3; dbSNP:rs67865220." evidence="7">
    <original>G</original>
    <variation>C</variation>
    <location>
        <position position="337"/>
    </location>
</feature>
<feature type="sequence variant" id="VAR_001858" description="In OI3; dbSNP:rs67865220." evidence="68">
    <original>G</original>
    <variation>S</variation>
    <location>
        <position position="337"/>
    </location>
</feature>
<feature type="sequence variant" id="VAR_055677" description="In dbSNP:rs16868573.">
    <original>L</original>
    <variation>V</variation>
    <location>
        <position position="344"/>
    </location>
</feature>
<feature type="sequence variant" id="VAR_001859" description="In OI3 and OI2." evidence="28 63">
    <location>
        <position position="345"/>
    </location>
</feature>
<feature type="sequence variant" id="VAR_001860" description="In OI3; dbSNP:rs66773001." evidence="25 64">
    <original>G</original>
    <variation>C</variation>
    <location>
        <position position="349"/>
    </location>
</feature>
<feature type="sequence variant" id="VAR_063352" description="In OI3; dbSNP:rs66619856." evidence="16">
    <original>G</original>
    <variation>S</variation>
    <location>
        <position position="358"/>
    </location>
</feature>
<feature type="sequence variant" id="VAR_063353" description="In OI2." evidence="24">
    <original>G</original>
    <variation>E</variation>
    <location>
        <position position="397"/>
    </location>
</feature>
<feature type="sequence variant" id="VAR_001861" description="In OI2; dbSNP:rs72658109." evidence="8">
    <original>G</original>
    <variation>V</variation>
    <location>
        <position position="409"/>
    </location>
</feature>
<feature type="sequence variant" id="VAR_001862" description="In OI2; dbSNP:rs72658114." evidence="57">
    <original>G</original>
    <variation>E</variation>
    <location>
        <position position="433"/>
    </location>
</feature>
<feature type="sequence variant" id="VAR_063354" description="In OI2; dbSNP:rs72658117." evidence="24 28">
    <original>G</original>
    <variation>C</variation>
    <location>
        <position position="454"/>
    </location>
</feature>
<feature type="sequence variant" id="VAR_063355" description="In OI2; requires 2 nucleotide substitutions." evidence="24">
    <original>G</original>
    <variation>L</variation>
    <location>
        <position position="457"/>
    </location>
</feature>
<feature type="sequence variant" id="VAR_001863" description="In OI3; dbSNP:rs72658118." evidence="68">
    <original>G</original>
    <variation>S</variation>
    <location>
        <position position="460"/>
    </location>
</feature>
<feature type="sequence variant" id="VAR_063356" description="In OI2." evidence="24">
    <location>
        <begin position="461"/>
        <end position="466"/>
    </location>
</feature>
<feature type="sequence variant" id="VAR_030119" description="In dbSNP:rs414408." evidence="36 70">
    <original>A</original>
    <variation>V</variation>
    <location>
        <position position="483"/>
    </location>
</feature>
<feature type="sequence variant" id="VAR_001864" description="In OI2; dbSNP:rs66999265." evidence="71">
    <original>G</original>
    <variation>D</variation>
    <location>
        <position position="511"/>
    </location>
</feature>
<feature type="sequence variant" id="VAR_001865" description="In OI3; dbSNP:rs72658126." evidence="50">
    <original>G</original>
    <variation>R</variation>
    <location>
        <position position="517"/>
    </location>
</feature>
<feature type="sequence variant" id="VAR_063357" description="In OI2; dbSNP:rs72658130." evidence="24">
    <original>G</original>
    <variation>E</variation>
    <location>
        <position position="526"/>
    </location>
</feature>
<feature type="sequence variant" id="VAR_033040" description="In dbSNP:rs41317144." evidence="22">
    <original>N</original>
    <variation>S</variation>
    <location>
        <position position="528"/>
    </location>
</feature>
<feature type="sequence variant" id="VAR_001866" description="In OI2; dbSNP:rs72658136." evidence="9">
    <original>G</original>
    <variation>R</variation>
    <location>
        <position position="547"/>
    </location>
</feature>
<feature type="sequence variant" id="VAR_001867" description="In dbSNP:rs42524." evidence="13 22 24 36 37 65 69">
    <original>P</original>
    <variation>A</variation>
    <location>
        <position position="549"/>
    </location>
</feature>
<feature type="sequence variant" id="VAR_001868" description="In OI2; dbSNP:rs72658138." evidence="10 28">
    <original>G</original>
    <variation>C</variation>
    <location>
        <position position="562"/>
    </location>
</feature>
<feature type="sequence variant" id="VAR_063358" description="In OI2." evidence="24">
    <original>G</original>
    <variation>V</variation>
    <location>
        <position position="562"/>
    </location>
</feature>
<feature type="sequence variant" id="VAR_033041" description="In dbSNP:rs41317153." evidence="22">
    <original>A</original>
    <variation>T</variation>
    <location>
        <position position="564"/>
    </location>
</feature>
<feature type="sequence variant" id="VAR_001869" description="In OI2; dbSNP:rs72658139." evidence="21">
    <original>G</original>
    <variation>R</variation>
    <location>
        <position position="586"/>
    </location>
</feature>
<feature type="sequence variant" id="VAR_001870" description="In OI2; dbSNP:rs72658141." evidence="58">
    <original>G</original>
    <variation>S</variation>
    <location>
        <position position="592"/>
    </location>
</feature>
<feature type="sequence variant" id="VAR_063359" description="Found in patients with osteogenesis imperfecta; likely pathogenic; dbSNP:rs72658143." evidence="16">
    <original>G</original>
    <variation>S</variation>
    <location>
        <position position="601"/>
    </location>
</feature>
<feature type="sequence variant" id="VAR_063360" description="In OI2; dbSNP:rs72658145." evidence="19">
    <original>G</original>
    <variation>D</variation>
    <location>
        <position position="625"/>
    </location>
</feature>
<feature type="sequence variant" id="VAR_001871" description="In OI4; dbSNP:rs72658147." evidence="62">
    <original>G</original>
    <variation>V</variation>
    <location>
        <position position="634"/>
    </location>
</feature>
<feature type="sequence variant" id="VAR_001872" description="In OI2; dbSNP:rs72658148." evidence="21">
    <original>G</original>
    <variation>D</variation>
    <location>
        <position position="637"/>
    </location>
</feature>
<feature type="sequence variant" id="VAR_001874" description="In OI2; dbSNP:rs72658155." evidence="12">
    <original>G</original>
    <variation>D</variation>
    <location>
        <position position="670"/>
    </location>
</feature>
<feature type="sequence variant" id="VAR_030120" description="In OI2." evidence="11">
    <location>
        <begin position="676"/>
        <end position="855"/>
    </location>
</feature>
<feature type="sequence variant" id="VAR_063361" description="In OI3; dbSNP:rs66883877." evidence="16">
    <original>G</original>
    <variation>D</variation>
    <location>
        <position position="676"/>
    </location>
</feature>
<feature type="sequence variant" id="VAR_001875" description="In OI3 and OI4; dbSNP:rs66883877." evidence="27 55">
    <original>G</original>
    <variation>V</variation>
    <location>
        <position position="676"/>
    </location>
</feature>
<feature type="sequence variant" id="VAR_030121" description="In dbSNP:rs409108." evidence="36 41 49 69 70">
    <original>P</original>
    <variation>H</variation>
    <location>
        <position position="678"/>
    </location>
</feature>
<feature type="sequence variant" id="VAR_063362" description="In OI2." evidence="24">
    <location>
        <begin position="705"/>
        <end position="707"/>
    </location>
</feature>
<feature type="sequence variant" id="VAR_001876" description="Found in a patient with a variant form of Marfan syndrome; uncertain significance; dbSNP:rs72658163.">
    <original>R</original>
    <variation>Q</variation>
    <location>
        <position position="708"/>
    </location>
</feature>
<feature type="sequence variant" id="VAR_001877" description="In OI2; dbSNP:rs72658167." evidence="28">
    <original>G</original>
    <variation>D</variation>
    <location>
        <position position="715"/>
    </location>
</feature>
<feature type="sequence variant" id="VAR_001878" description="In OI2; dbSNP:rs72658171." evidence="56">
    <original>G</original>
    <variation>C</variation>
    <location>
        <position position="730"/>
    </location>
</feature>
<feature type="sequence variant" id="VAR_063363" description="In OI1; dbSNP:rs72658172." evidence="17">
    <original>G</original>
    <variation>C</variation>
    <location>
        <position position="733"/>
    </location>
</feature>
<feature type="sequence variant" id="VAR_001879" description="In OI1; mild; dbSNP:rs72658173." evidence="25 64">
    <original>G</original>
    <variation>C</variation>
    <location>
        <position position="736"/>
    </location>
</feature>
<feature type="sequence variant" id="VAR_063364" description="In OI2; dbSNP:rs72658174." evidence="24">
    <original>G</original>
    <variation>R</variation>
    <location>
        <position position="739"/>
    </location>
</feature>
<feature type="sequence variant" id="VAR_001880" description="In dbSNP:rs408535." evidence="36 41 70">
    <original>A</original>
    <variation>G</variation>
    <location>
        <position position="743"/>
    </location>
</feature>
<feature type="sequence variant" id="VAR_063365" description="In OI2." evidence="24">
    <original>G</original>
    <variation>V</variation>
    <location>
        <position position="748"/>
    </location>
</feature>
<feature type="sequence variant" id="VAR_001881" description="In OI4; dbSNP:rs72658176." evidence="26">
    <original>G</original>
    <variation>S</variation>
    <location>
        <position position="751"/>
    </location>
</feature>
<feature type="sequence variant" id="VAR_063366" description="In OI4; dbSNP:rs72658177." evidence="19">
    <original>G</original>
    <variation>C</variation>
    <location>
        <position position="754"/>
    </location>
</feature>
<feature type="sequence variant" id="VAR_001882" description="In OI3." evidence="34">
    <original>G</original>
    <variation>R</variation>
    <location>
        <position position="754"/>
    </location>
</feature>
<feature type="sequence variant" id="VAR_001883" description="In OI4; dbSNP:rs72658183." evidence="51">
    <original>G</original>
    <variation>V</variation>
    <location>
        <position position="766"/>
    </location>
</feature>
<feature type="sequence variant" id="VAR_001884" description="In OI3; dbSNP:rs72658186." evidence="52">
    <original>G</original>
    <variation>S</variation>
    <location>
        <position position="778"/>
    </location>
</feature>
<feature type="sequence variant" id="VAR_001885" description="In OI2; dbSNP:rs66592844." evidence="23">
    <original>G</original>
    <variation>R</variation>
    <location>
        <position position="784"/>
    </location>
</feature>
<feature type="sequence variant" id="VAR_001886" description="In OI2; dbSNP:rs72658187." evidence="8">
    <original>G</original>
    <variation>C</variation>
    <location>
        <position position="787"/>
    </location>
</feature>
<feature type="sequence variant" id="VAR_001887" description="In OI2; dbSNP:rs72658188." evidence="24 61">
    <original>G</original>
    <variation>D</variation>
    <location>
        <position position="790"/>
    </location>
</feature>
<feature type="sequence variant" id="VAR_001888" description="In OI2; dbSNP:rs66716547." evidence="51">
    <original>G</original>
    <variation>S</variation>
    <location>
        <position position="796"/>
    </location>
</feature>
<feature type="sequence variant" id="VAR_063367" description="In OI2." evidence="24">
    <original>P</original>
    <variation>PP</variation>
    <location>
        <position position="798"/>
    </location>
</feature>
<feature type="sequence variant" id="VAR_063368" description="In OI2." evidence="24">
    <location>
        <begin position="806"/>
        <end position="811"/>
    </location>
</feature>
<feature type="sequence variant" id="VAR_063369" description="In OI4.">
    <original>G</original>
    <variation>GPPG</variation>
    <location>
        <position position="811"/>
    </location>
</feature>
<feature type="sequence variant" id="VAR_063370" description="In OI3; dbSNP:rs72658191." evidence="16">
    <original>G</original>
    <variation>S</variation>
    <location>
        <position position="820"/>
    </location>
</feature>
<feature type="sequence variant" id="VAR_001889" description="In dbSNP:rs1800240." evidence="68">
    <original>R</original>
    <variation>H</variation>
    <location>
        <position position="822"/>
    </location>
</feature>
<feature type="sequence variant" id="VAR_063371" description="In OI3." evidence="19">
    <original>G</original>
    <variation>C</variation>
    <location>
        <position position="835"/>
    </location>
</feature>
<feature type="sequence variant" id="VAR_001890" description="In OI1; dbSNP:rs72658193." evidence="68">
    <original>G</original>
    <variation>S</variation>
    <location>
        <position position="835"/>
    </location>
</feature>
<feature type="sequence variant" id="VAR_063372" description="In OI3." evidence="16">
    <original>G</original>
    <variation>R</variation>
    <location>
        <position position="856"/>
    </location>
</feature>
<feature type="sequence variant" id="VAR_063373" description="In OI2." evidence="24">
    <original>G</original>
    <variation>V</variation>
    <location>
        <position position="856"/>
    </location>
</feature>
<feature type="sequence variant" id="VAR_001891" description="In OI2; dbSNP:rs72658201." evidence="72">
    <original>G</original>
    <variation>C</variation>
    <location>
        <position position="877"/>
    </location>
</feature>
<feature type="sequence variant" id="VAR_001892" description="In OI3 and OI4; dbSNP:rs72659304." evidence="67">
    <original>G</original>
    <variation>D</variation>
    <location>
        <position position="892"/>
    </location>
</feature>
<feature type="sequence variant" id="VAR_001893" description="In OI2; dbSNP:rs72659305." evidence="20">
    <original>G</original>
    <variation>D</variation>
    <location>
        <position position="895"/>
    </location>
</feature>
<feature type="sequence variant" id="VAR_001894" description="In OI3; moderate; dbSNP:rs72659312." evidence="24 59">
    <original>G</original>
    <variation>S</variation>
    <location>
        <position position="949"/>
    </location>
</feature>
<feature type="sequence variant" id="VAR_063374" description="In OI2; dbSNP:rs2115952213." evidence="24">
    <original>G</original>
    <variation>D</variation>
    <location>
        <position position="955"/>
    </location>
</feature>
<feature type="sequence variant" id="VAR_001895" description="In OI2; dbSNP:rs66507857." evidence="35">
    <original>G</original>
    <variation>S</variation>
    <location>
        <position position="955"/>
    </location>
</feature>
<feature type="sequence variant" id="VAR_008120" description="In OI3; dbSNP:rs67609234." evidence="7">
    <original>G</original>
    <variation>V</variation>
    <location>
        <position position="973"/>
    </location>
</feature>
<feature type="sequence variant" id="VAR_063375" description="In OI2; dbSNP:rs67422093." evidence="17">
    <original>G</original>
    <variation>D</variation>
    <location>
        <position position="982"/>
    </location>
</feature>
<feature type="sequence variant" id="VAR_063376" description="In OI4.">
    <original>P</original>
    <variation>PVGP</variation>
    <location>
        <position position="989"/>
    </location>
</feature>
<feature type="sequence variant" id="VAR_063377" description="In OI3; dbSNP:rs72659316." evidence="19">
    <original>G</original>
    <variation>V</variation>
    <location>
        <position position="991"/>
    </location>
</feature>
<feature type="sequence variant" id="VAR_001896" description="In OI2; dbSNP:rs72659317." evidence="39">
    <original>G</original>
    <variation>D</variation>
    <location>
        <position position="997"/>
    </location>
</feature>
<feature type="sequence variant" id="VAR_063378" description="In OI2; dbSNP:rs1114167414." evidence="17">
    <original>G</original>
    <variation>D</variation>
    <location>
        <position position="1003"/>
    </location>
</feature>
<feature type="sequence variant" id="VAR_001897" description="In OI3 and OI4; moderate; dbSNP:rs72659319." evidence="16 60">
    <original>G</original>
    <variation>S</variation>
    <location>
        <position position="1012"/>
    </location>
</feature>
<feature type="sequence variant" id="VAR_001898" description="In dbSNP:rs392609." evidence="36 49 70">
    <original>L</original>
    <variation>F</variation>
    <location>
        <position position="1022"/>
    </location>
</feature>
<feature type="sequence variant" id="VAR_063379" description="In OI2; dbSNP:rs72659323." evidence="24">
    <original>G</original>
    <variation>E</variation>
    <location>
        <position position="1027"/>
    </location>
</feature>
<feature type="sequence variant" id="VAR_063380" description="In OI2." evidence="24">
    <location>
        <begin position="1058"/>
        <end position="1062"/>
    </location>
</feature>
<feature type="sequence variant" id="VAR_001899" description="In OI2; dbSNP:rs72659331." evidence="21">
    <original>G</original>
    <variation>D</variation>
    <location>
        <position position="1066"/>
    </location>
</feature>
<feature type="sequence variant" id="VAR_069633" description="In dbSNP:rs530026906." evidence="31">
    <original>R</original>
    <variation>H</variation>
    <location>
        <position position="1067"/>
    </location>
</feature>
<feature type="sequence variant" id="VAR_001900" description="In OI2; dbSNP:rs1792298130." evidence="20">
    <original>G</original>
    <variation>C</variation>
    <location>
        <position position="1078"/>
    </location>
</feature>
<feature type="sequence variant" id="VAR_063381" description="In OI3 and OI2; dbSNP:rs72659335." evidence="17 28">
    <original>G</original>
    <variation>D</variation>
    <location>
        <position position="1087"/>
    </location>
</feature>
<feature type="sequence variant" id="VAR_063382" description="In OI4." evidence="16">
    <location>
        <begin position="1094"/>
        <end position="1096"/>
    </location>
</feature>
<feature type="sequence variant" id="VAR_001901" description="In OI3; dbSNP:rs72659337." evidence="53">
    <original>G</original>
    <variation>A</variation>
    <location>
        <position position="1096"/>
    </location>
</feature>
<feature type="sequence variant" id="VAR_001903">
    <original>P</original>
    <variation>L</variation>
    <location>
        <position position="1101"/>
    </location>
</feature>
<feature type="sequence variant" id="VAR_001902" description="In OI4; dbSNP:rs67768540." evidence="38">
    <original>G</original>
    <variation>R</variation>
    <location>
        <position position="1102"/>
    </location>
</feature>
<feature type="sequence variant" id="VAR_066386" description="Found in a patient with mild osteogenesis imperfecta and increased bone mineral density; results in defective type I procollagen processing; incorporation of the immature procollagen into the matrix leads to increased bone matrix mineralization and altered collagen fibril structure." evidence="29">
    <original>A</original>
    <variation>T</variation>
    <location>
        <position position="1119"/>
    </location>
</feature>
<feature type="sequence variant" id="VAR_001904" description="In OI3; dbSNP:rs1800250." evidence="66">
    <original>T</original>
    <variation>P</variation>
    <location>
        <position position="1148"/>
    </location>
</feature>
<feature type="sequence variant" id="VAR_001905" description="In dbSNP:rs422361." evidence="36 49 70">
    <original>D</original>
    <variation>E</variation>
    <location>
        <position position="1189"/>
    </location>
</feature>
<feature type="sequence variant" id="VAR_063383" description="In OI1; dbSNP:rs72659342." evidence="17">
    <original>C</original>
    <variation>Y</variation>
    <location>
        <position position="1195"/>
    </location>
</feature>
<feature type="sequence variant" id="VAR_001906" description="In dbSNP:rs384487." evidence="36 49 70">
    <original>S</original>
    <variation>P</variation>
    <location>
        <position position="1198"/>
    </location>
</feature>
<feature type="sequence variant" id="VAR_030122" description="In dbSNP:rs418570." evidence="30 36 47 48 49 69 70">
    <original>Q</original>
    <variation>H</variation>
    <location>
        <position position="1354"/>
    </location>
</feature>
<feature type="sequence conflict" description="In Ref. 6; CAA26320." evidence="73" ref="6">
    <original>E</original>
    <variation>G</variation>
    <location>
        <position position="55"/>
    </location>
</feature>
<feature type="sequence conflict" description="In Ref. 1; AAB59374." evidence="73" ref="1">
    <original>V</original>
    <variation>P</variation>
    <location>
        <position position="333"/>
    </location>
</feature>
<feature type="sequence conflict" description="In Ref. 1; AAB59374." evidence="73" ref="1">
    <original>A</original>
    <variation>T</variation>
    <location>
        <position position="338"/>
    </location>
</feature>
<feature type="sequence conflict" description="In Ref. 5; CAA68709." evidence="73" ref="5">
    <original>P</original>
    <variation>D</variation>
    <location>
        <position position="549"/>
    </location>
</feature>
<feature type="sequence conflict" description="In Ref. 19; CAA23761." evidence="73" ref="19">
    <original>V</original>
    <variation>A</variation>
    <location>
        <position position="828"/>
    </location>
</feature>
<feature type="sequence conflict" description="In Ref. 19; CAA23761." evidence="73" ref="19">
    <original>T</original>
    <variation>P</variation>
    <location>
        <position position="831"/>
    </location>
</feature>
<feature type="sequence conflict" description="In Ref. 19; CAA23761." evidence="73" ref="19">
    <original>V</original>
    <variation>P</variation>
    <location>
        <position position="837"/>
    </location>
</feature>
<feature type="sequence conflict" description="In Ref. 23; AAA51996." evidence="73" ref="23">
    <original>E</original>
    <variation>V</variation>
    <location>
        <position position="980"/>
    </location>
</feature>
<feature type="sequence conflict" description="In Ref. 19; CAA23761." evidence="73" ref="19">
    <original>P</original>
    <variation>L</variation>
    <location>
        <position position="1098"/>
    </location>
</feature>
<feature type="sequence conflict" description="In Ref. 19; CAA23761." evidence="73" ref="19">
    <location>
        <begin position="1122"/>
        <end position="1125"/>
    </location>
</feature>
<feature type="sequence conflict" description="In Ref. 25; AAA51887." evidence="73" ref="25">
    <original>R</original>
    <variation>A</variation>
    <location>
        <position position="1338"/>
    </location>
</feature>